<reference key="1">
    <citation type="journal article" date="1998" name="J. Biol. Chem.">
        <title>Human beta-filamin is a new protein that interacts with the cytoplasmic tail of glycoprotein Ibalpha.</title>
        <authorList>
            <person name="Takafuta T."/>
            <person name="Wu G."/>
            <person name="Murphy G.F."/>
            <person name="Shapiro S.S."/>
        </authorList>
    </citation>
    <scope>NUCLEOTIDE SEQUENCE [MRNA] (ISOFORM 1)</scope>
    <scope>TISSUE SPECIFICITY</scope>
    <scope>SUBCELLULAR LOCATION</scope>
    <scope>INTERACTION WITH GP1BA</scope>
    <scope>VARIANTS ASN-1157 AND MET-1471</scope>
    <source>
        <tissue>Endothelial cell</tissue>
        <tissue>Placenta</tissue>
    </source>
</reference>
<reference key="2">
    <citation type="journal article" date="1998" name="Blood">
        <title>A novel human actin-binding protein homologue that binds to platelet glycoprotein Ibalpha.</title>
        <authorList>
            <person name="Xu W.-F."/>
            <person name="Xie Z.-W."/>
            <person name="Chung D.W."/>
            <person name="Davie E.W."/>
        </authorList>
    </citation>
    <scope>NUCLEOTIDE SEQUENCE [MRNA] (ISOFORM 2)</scope>
    <scope>ALTERNATIVE SPLICING</scope>
    <scope>TISSUE SPECIFICITY</scope>
    <scope>INTERACTION WITH GP1BA</scope>
    <source>
        <tissue>Placenta</tissue>
    </source>
</reference>
<reference key="3">
    <citation type="journal article" date="2002" name="J. Cell Biol.">
        <title>Different splice variants of filamin-B affect myogenesis, subcellular distribution, and determine binding to integrin (beta) subunits.</title>
        <authorList>
            <person name="van Der Flier A."/>
            <person name="Kuikman I."/>
            <person name="Kramer D."/>
            <person name="Geerts D."/>
            <person name="Kreft M."/>
            <person name="Takafuta T."/>
            <person name="Shapiro S.S."/>
            <person name="Sonnenberg A."/>
        </authorList>
    </citation>
    <scope>NUCLEOTIDE SEQUENCE [GENOMIC DNA] (ISOFORMS 1; 3; 4 AND 5)</scope>
    <scope>TISSUE SPECIFICITY</scope>
    <scope>SUBCELLULAR LOCATION</scope>
    <scope>INTERACTION WITH ISOFORMS OF ITGB1</scope>
    <source>
        <tissue>Keratinocyte</tissue>
        <tissue>Skeletal muscle</tissue>
    </source>
</reference>
<reference key="4">
    <citation type="journal article" date="2000" name="Hum. Genet.">
        <title>Genomic structure and fine mapping of the two human filamin gene paralogues FLNB and FLNC and comparative analysis of the filamin gene family.</title>
        <authorList>
            <person name="Chakarova C."/>
            <person name="Wehnert M.S."/>
            <person name="Uhl K."/>
            <person name="Sakthivel S."/>
            <person name="Vosberg H.-P."/>
            <person name="van der Ven P.F.M."/>
            <person name="Fuerst D.O."/>
        </authorList>
    </citation>
    <scope>NUCLEOTIDE SEQUENCE [GENOMIC DNA / MRNA] (ISOFORM 1)</scope>
    <scope>GENE ORGANIZATION</scope>
    <scope>SIMILARITY TO OTHER MEMBERS OF THE FAMILY</scope>
    <scope>VARIANTS ASN-1157 AND MET-1471</scope>
</reference>
<reference key="5">
    <citation type="journal article" date="2008" name="DNA Res.">
        <title>Fine expression profiling of full-length transcripts using a size-unbiased cDNA library prepared with the vector-capping method.</title>
        <authorList>
            <person name="Oshikawa M."/>
            <person name="Sugai Y."/>
            <person name="Usami R."/>
            <person name="Ohtoko K."/>
            <person name="Toyama S."/>
            <person name="Kato S."/>
        </authorList>
    </citation>
    <scope>NUCLEOTIDE SEQUENCE [MRNA] (ISOFORMS 1; 2; 8 AND 9)</scope>
    <scope>VARIANTS ASN-1157 AND MET-1471</scope>
</reference>
<reference key="6">
    <citation type="journal article" date="2005" name="DNA Res.">
        <title>Vector-capping: a simple method for preparing a high-quality full-length cDNA library.</title>
        <authorList>
            <person name="Kato S."/>
            <person name="Ohtoko K."/>
            <person name="Ohtake H."/>
            <person name="Kimura T."/>
        </authorList>
    </citation>
    <scope>NUCLEOTIDE SEQUENCE [LARGE SCALE MRNA] (ISOFORMS 1; 2; 8 AND 9)</scope>
</reference>
<reference key="7">
    <citation type="journal article" date="2007" name="BMC Genomics">
        <title>The full-ORF clone resource of the German cDNA consortium.</title>
        <authorList>
            <person name="Bechtel S."/>
            <person name="Rosenfelder H."/>
            <person name="Duda A."/>
            <person name="Schmidt C.P."/>
            <person name="Ernst U."/>
            <person name="Wellenreuther R."/>
            <person name="Mehrle A."/>
            <person name="Schuster C."/>
            <person name="Bahr A."/>
            <person name="Bloecker H."/>
            <person name="Heubner D."/>
            <person name="Hoerlein A."/>
            <person name="Michel G."/>
            <person name="Wedler H."/>
            <person name="Koehrer K."/>
            <person name="Ottenwaelder B."/>
            <person name="Poustka A."/>
            <person name="Wiemann S."/>
            <person name="Schupp I."/>
        </authorList>
    </citation>
    <scope>NUCLEOTIDE SEQUENCE [LARGE SCALE MRNA] (ISOFORM 7)</scope>
    <source>
        <tissue>Endometrial tumor</tissue>
        <tissue>Fetal brain</tissue>
    </source>
</reference>
<reference key="8">
    <citation type="journal article" date="2006" name="Nature">
        <title>The DNA sequence, annotation and analysis of human chromosome 3.</title>
        <authorList>
            <person name="Muzny D.M."/>
            <person name="Scherer S.E."/>
            <person name="Kaul R."/>
            <person name="Wang J."/>
            <person name="Yu J."/>
            <person name="Sudbrak R."/>
            <person name="Buhay C.J."/>
            <person name="Chen R."/>
            <person name="Cree A."/>
            <person name="Ding Y."/>
            <person name="Dugan-Rocha S."/>
            <person name="Gill R."/>
            <person name="Gunaratne P."/>
            <person name="Harris R.A."/>
            <person name="Hawes A.C."/>
            <person name="Hernandez J."/>
            <person name="Hodgson A.V."/>
            <person name="Hume J."/>
            <person name="Jackson A."/>
            <person name="Khan Z.M."/>
            <person name="Kovar-Smith C."/>
            <person name="Lewis L.R."/>
            <person name="Lozado R.J."/>
            <person name="Metzker M.L."/>
            <person name="Milosavljevic A."/>
            <person name="Miner G.R."/>
            <person name="Morgan M.B."/>
            <person name="Nazareth L.V."/>
            <person name="Scott G."/>
            <person name="Sodergren E."/>
            <person name="Song X.-Z."/>
            <person name="Steffen D."/>
            <person name="Wei S."/>
            <person name="Wheeler D.A."/>
            <person name="Wright M.W."/>
            <person name="Worley K.C."/>
            <person name="Yuan Y."/>
            <person name="Zhang Z."/>
            <person name="Adams C.Q."/>
            <person name="Ansari-Lari M.A."/>
            <person name="Ayele M."/>
            <person name="Brown M.J."/>
            <person name="Chen G."/>
            <person name="Chen Z."/>
            <person name="Clendenning J."/>
            <person name="Clerc-Blankenburg K.P."/>
            <person name="Chen R."/>
            <person name="Chen Z."/>
            <person name="Davis C."/>
            <person name="Delgado O."/>
            <person name="Dinh H.H."/>
            <person name="Dong W."/>
            <person name="Draper H."/>
            <person name="Ernst S."/>
            <person name="Fu G."/>
            <person name="Gonzalez-Garay M.L."/>
            <person name="Garcia D.K."/>
            <person name="Gillett W."/>
            <person name="Gu J."/>
            <person name="Hao B."/>
            <person name="Haugen E."/>
            <person name="Havlak P."/>
            <person name="He X."/>
            <person name="Hennig S."/>
            <person name="Hu S."/>
            <person name="Huang W."/>
            <person name="Jackson L.R."/>
            <person name="Jacob L.S."/>
            <person name="Kelly S.H."/>
            <person name="Kube M."/>
            <person name="Levy R."/>
            <person name="Li Z."/>
            <person name="Liu B."/>
            <person name="Liu J."/>
            <person name="Liu W."/>
            <person name="Lu J."/>
            <person name="Maheshwari M."/>
            <person name="Nguyen B.-V."/>
            <person name="Okwuonu G.O."/>
            <person name="Palmeiri A."/>
            <person name="Pasternak S."/>
            <person name="Perez L.M."/>
            <person name="Phelps K.A."/>
            <person name="Plopper F.J."/>
            <person name="Qiang B."/>
            <person name="Raymond C."/>
            <person name="Rodriguez R."/>
            <person name="Saenphimmachak C."/>
            <person name="Santibanez J."/>
            <person name="Shen H."/>
            <person name="Shen Y."/>
            <person name="Subramanian S."/>
            <person name="Tabor P.E."/>
            <person name="Verduzco D."/>
            <person name="Waldron L."/>
            <person name="Wang J."/>
            <person name="Wang J."/>
            <person name="Wang Q."/>
            <person name="Williams G.A."/>
            <person name="Wong G.K.-S."/>
            <person name="Yao Z."/>
            <person name="Zhang J."/>
            <person name="Zhang X."/>
            <person name="Zhao G."/>
            <person name="Zhou J."/>
            <person name="Zhou Y."/>
            <person name="Nelson D."/>
            <person name="Lehrach H."/>
            <person name="Reinhardt R."/>
            <person name="Naylor S.L."/>
            <person name="Yang H."/>
            <person name="Olson M."/>
            <person name="Weinstock G."/>
            <person name="Gibbs R.A."/>
        </authorList>
    </citation>
    <scope>NUCLEOTIDE SEQUENCE [LARGE SCALE GENOMIC DNA]</scope>
</reference>
<reference key="9">
    <citation type="submission" date="2005-03" db="EMBL/GenBank/DDBJ databases">
        <authorList>
            <person name="Totoki Y."/>
            <person name="Toyoda A."/>
            <person name="Takeda T."/>
            <person name="Sakaki Y."/>
            <person name="Tanaka A."/>
            <person name="Yokoyama S."/>
            <person name="Ohara O."/>
            <person name="Nagase T."/>
            <person name="Kikuno R.F."/>
        </authorList>
    </citation>
    <scope>NUCLEOTIDE SEQUENCE [LARGE SCALE MRNA] OF 990-2602</scope>
    <source>
        <tissue>Aortic endothelium</tissue>
    </source>
</reference>
<reference key="10">
    <citation type="journal article" date="2001" name="J. Cell Biol.">
        <title>The SH2-containing inositol polyphosphate 5-phosphatase, SHIP-2, binds filamin and regulates submembraneous actin.</title>
        <authorList>
            <person name="Dyson J.M."/>
            <person name="O'Malley C.J."/>
            <person name="Becanovic J."/>
            <person name="Munday A.D."/>
            <person name="Berndt M.C."/>
            <person name="Coghill I.D."/>
            <person name="Nandurkar H.H."/>
            <person name="Ooms L.M."/>
            <person name="Mitchell C.A."/>
        </authorList>
    </citation>
    <scope>NUCLEOTIDE SEQUENCE [MRNA] OF 2130-2602</scope>
    <scope>INTERACTION WITH INPPL1</scope>
    <source>
        <tissue>Skeletal muscle</tissue>
    </source>
</reference>
<reference key="11">
    <citation type="journal article" date="2001" name="Genome Res.">
        <title>Towards a catalog of human genes and proteins: sequencing and analysis of 500 novel complete protein coding human cDNAs.</title>
        <authorList>
            <person name="Wiemann S."/>
            <person name="Weil B."/>
            <person name="Wellenreuther R."/>
            <person name="Gassenhuber J."/>
            <person name="Glassl S."/>
            <person name="Ansorge W."/>
            <person name="Boecher M."/>
            <person name="Bloecker H."/>
            <person name="Bauersachs S."/>
            <person name="Blum H."/>
            <person name="Lauber J."/>
            <person name="Duesterhoeft A."/>
            <person name="Beyer A."/>
            <person name="Koehrer K."/>
            <person name="Strack N."/>
            <person name="Mewes H.-W."/>
            <person name="Ottenwaelder B."/>
            <person name="Obermaier B."/>
            <person name="Tampe J."/>
            <person name="Heubner D."/>
            <person name="Wambutt R."/>
            <person name="Korn B."/>
            <person name="Klein M."/>
            <person name="Poustka A."/>
        </authorList>
    </citation>
    <scope>NUCLEOTIDE SEQUENCE [LARGE SCALE MRNA] OF 1874-2602</scope>
    <source>
        <tissue>Fetal brain</tissue>
    </source>
</reference>
<reference key="12">
    <citation type="journal article" date="1998" name="J. Neurosci.">
        <title>Interaction of presenilins with the filamin family of actin-binding proteins.</title>
        <authorList>
            <person name="Zhang W."/>
            <person name="Han S.W."/>
            <person name="McKeel D.W."/>
            <person name="Goate A."/>
            <person name="Wu J.Y."/>
        </authorList>
    </citation>
    <scope>NUCLEOTIDE SEQUENCE [MRNA] OF 2311-2602</scope>
    <scope>INTERACTION WITH PSEN1 AND PSEN2</scope>
    <source>
        <tissue>Fetal brain</tissue>
    </source>
</reference>
<reference key="13">
    <citation type="journal article" date="1993" name="Proc. Natl. Acad. Sci. U.S.A.">
        <title>Cloning from the thyroid of a protein related to actin binding protein that is recognized by Graves disease immunoglobulins.</title>
        <authorList>
            <person name="Leedman P.J."/>
            <person name="Faulkner-Jones B."/>
            <person name="Cram D.C."/>
            <person name="Harrison P.J."/>
            <person name="West J."/>
            <person name="O'Brien E.J."/>
            <person name="Simpson R."/>
            <person name="Coppel R.L."/>
            <person name="Harrison L.C."/>
        </authorList>
    </citation>
    <scope>NUCLEOTIDE SEQUENCE [MRNA] OF 2404-2602</scope>
    <scope>TISSUE SPECIFICITY</scope>
    <source>
        <tissue>Thyroid</tissue>
    </source>
</reference>
<reference key="14">
    <citation type="journal article" date="2000" name="J. Biomed. Sci.">
        <title>Hepatitis B virus core protein interacts with the C-terminal region of actin-binding protein.</title>
        <authorList>
            <person name="Huang C.J."/>
            <person name="Chen Y.H."/>
            <person name="Ting L.P."/>
        </authorList>
    </citation>
    <scope>INTERACTION WITH HBV CAPSID PROTEIN</scope>
</reference>
<reference key="15">
    <citation type="journal article" date="2002" name="Hum. Mol. Genet.">
        <title>Filamin A and filamin B are co-expressed within neurons during periods of neuronal migration and can physically interact.</title>
        <authorList>
            <person name="Sheen V.L."/>
            <person name="Feng Y."/>
            <person name="Graham D."/>
            <person name="Takafuta T."/>
            <person name="Shapiro S.S."/>
            <person name="Walsh C.A."/>
        </authorList>
    </citation>
    <scope>INTERACTION WITH FLNA</scope>
</reference>
<reference key="16">
    <citation type="journal article" date="2003" name="J. Biol. Chem.">
        <title>A new member of the LIM protein family binds to filamin B and localizes at stress fibers.</title>
        <authorList>
            <person name="Takafuta T."/>
            <person name="Saeki M."/>
            <person name="Fujimoto T.-T."/>
            <person name="Fujimura K."/>
            <person name="Shapiro S.S."/>
        </authorList>
    </citation>
    <scope>INTERACTION WITH FBLP1</scope>
    <source>
        <tissue>Placenta</tissue>
    </source>
</reference>
<reference key="17">
    <citation type="journal article" date="2003" name="Biochemistry">
        <title>The limits of promiscuity: isoform-specific dimerization of filamins.</title>
        <authorList>
            <person name="Himmel M."/>
            <person name="van der Ven P.F.M."/>
            <person name="Stoecklein W."/>
            <person name="Fuerst D.O."/>
        </authorList>
    </citation>
    <scope>DIMERIZATION</scope>
    <scope>INTERACTION WITH FLNC</scope>
</reference>
<reference key="18">
    <citation type="journal article" date="2003" name="Nature">
        <title>Proteomic characterization of the human centrosome by protein correlation profiling.</title>
        <authorList>
            <person name="Andersen J.S."/>
            <person name="Wilkinson C.J."/>
            <person name="Mayor T."/>
            <person name="Mortensen P."/>
            <person name="Nigg E.A."/>
            <person name="Mann M."/>
        </authorList>
    </citation>
    <scope>IDENTIFICATION BY MASS SPECTROMETRY</scope>
    <source>
        <tissue>Lymphoblast</tissue>
    </source>
</reference>
<reference key="19">
    <citation type="journal article" date="2005" name="J. Cell Sci.">
        <title>The Z-disc proteins myotilin and FATZ-1 interact with each other and are connected to the sarcolemma via muscle-specific filamins.</title>
        <authorList>
            <person name="Gontier Y."/>
            <person name="Taivainen A."/>
            <person name="Fontao L."/>
            <person name="Sonnenberg A."/>
            <person name="van der Flier A."/>
            <person name="Carpen O."/>
            <person name="Faulkner G."/>
            <person name="Borradori L."/>
        </authorList>
    </citation>
    <scope>INTERACTION WITH ITGB1; MYOT AND MYOZ1</scope>
</reference>
<reference key="20">
    <citation type="journal article" date="2001" name="Biochim. Biophys. Acta">
        <title>Structural and functional aspects of filamins.</title>
        <authorList>
            <person name="van der Flier A."/>
            <person name="Sonnenberg A."/>
        </authorList>
    </citation>
    <scope>REVIEW</scope>
</reference>
<reference key="21">
    <citation type="journal article" date="2001" name="Nat. Rev. Mol. Cell Biol.">
        <title>Filamins as integrators of cell mechanics and signalling.</title>
        <authorList>
            <person name="Stossel T.P."/>
            <person name="Condeelis J."/>
            <person name="Cooley L."/>
            <person name="Hartwig J.H."/>
            <person name="Noegel A."/>
            <person name="Schleicher M."/>
            <person name="Shapiro S.S."/>
        </authorList>
    </citation>
    <scope>REVIEW</scope>
</reference>
<reference key="22">
    <citation type="journal article" date="2006" name="Nat. Biotechnol.">
        <title>A probability-based approach for high-throughput protein phosphorylation analysis and site localization.</title>
        <authorList>
            <person name="Beausoleil S.A."/>
            <person name="Villen J."/>
            <person name="Gerber S.A."/>
            <person name="Rush J."/>
            <person name="Gygi S.P."/>
        </authorList>
    </citation>
    <scope>PHOSPHORYLATION [LARGE SCALE ANALYSIS] AT SER-983</scope>
    <scope>IDENTIFICATION BY MASS SPECTROMETRY [LARGE SCALE ANALYSIS]</scope>
    <source>
        <tissue>Cervix carcinoma</tissue>
    </source>
</reference>
<reference key="23">
    <citation type="journal article" date="2008" name="Mol. Cell">
        <title>Kinase-selective enrichment enables quantitative phosphoproteomics of the kinome across the cell cycle.</title>
        <authorList>
            <person name="Daub H."/>
            <person name="Olsen J.V."/>
            <person name="Bairlein M."/>
            <person name="Gnad F."/>
            <person name="Oppermann F.S."/>
            <person name="Korner R."/>
            <person name="Greff Z."/>
            <person name="Keri G."/>
            <person name="Stemmann O."/>
            <person name="Mann M."/>
        </authorList>
    </citation>
    <scope>IDENTIFICATION BY MASS SPECTROMETRY [LARGE SCALE ANALYSIS]</scope>
    <source>
        <tissue>Cervix carcinoma</tissue>
    </source>
</reference>
<reference key="24">
    <citation type="journal article" date="2008" name="Proc. Natl. Acad. Sci. U.S.A.">
        <title>A quantitative atlas of mitotic phosphorylation.</title>
        <authorList>
            <person name="Dephoure N."/>
            <person name="Zhou C."/>
            <person name="Villen J."/>
            <person name="Beausoleil S.A."/>
            <person name="Bakalarski C.E."/>
            <person name="Elledge S.J."/>
            <person name="Gygi S.P."/>
        </authorList>
    </citation>
    <scope>PHOSPHORYLATION [LARGE SCALE ANALYSIS] AT THR-519; SER-983; SER-1028; SER-1316; SER-1505; SER-1602; SER-2083; SER-2107; SER-2478 AND SER-2481</scope>
    <scope>IDENTIFICATION BY MASS SPECTROMETRY [LARGE SCALE ANALYSIS]</scope>
    <source>
        <tissue>Cervix carcinoma</tissue>
    </source>
</reference>
<reference key="25">
    <citation type="journal article" date="2009" name="Cell Death Differ.">
        <title>The E3 ubiquitin ligase specificity subunit ASB2beta is a novel regulator of muscle differentiation that targets filamin B to proteasomal degradation.</title>
        <authorList>
            <person name="Bello N.F."/>
            <person name="Lamsoul I."/>
            <person name="Heuze M.L."/>
            <person name="Metais A."/>
            <person name="Moreaux G."/>
            <person name="Calderwood D.A."/>
            <person name="Duprez D."/>
            <person name="Moog-Lutz C."/>
            <person name="Lutz P.G."/>
        </authorList>
    </citation>
    <scope>UBIQUITINATION</scope>
</reference>
<reference key="26">
    <citation type="journal article" date="2009" name="EMBO Rep.">
        <title>ISG15 modification of filamin B negatively regulates the type I interferon-induced JNK signalling pathway.</title>
        <authorList>
            <person name="Jeon Y.J."/>
            <person name="Choi J.S."/>
            <person name="Lee J.Y."/>
            <person name="Yu K.R."/>
            <person name="Kim S.M."/>
            <person name="Ka S.H."/>
            <person name="Oh K.H."/>
            <person name="Kim K.I."/>
            <person name="Zhang D.E."/>
            <person name="Bang O.S."/>
            <person name="Chung C.H."/>
        </authorList>
    </citation>
    <scope>ISGYLATION AT LYS-2468</scope>
    <scope>MUTAGENESIS OF LYS-2468</scope>
</reference>
<reference key="27">
    <citation type="journal article" date="2009" name="Sci. Signal.">
        <title>Quantitative phosphoproteomic analysis of T cell receptor signaling reveals system-wide modulation of protein-protein interactions.</title>
        <authorList>
            <person name="Mayya V."/>
            <person name="Lundgren D.H."/>
            <person name="Hwang S.-I."/>
            <person name="Rezaul K."/>
            <person name="Wu L."/>
            <person name="Eng J.K."/>
            <person name="Rodionov V."/>
            <person name="Han D.K."/>
        </authorList>
    </citation>
    <scope>PHOSPHORYLATION [LARGE SCALE ANALYSIS] AT SER-983 AND SER-2478</scope>
    <scope>IDENTIFICATION BY MASS SPECTROMETRY [LARGE SCALE ANALYSIS]</scope>
    <source>
        <tissue>Leukemic T-cell</tissue>
    </source>
</reference>
<reference key="28">
    <citation type="journal article" date="2009" name="Science">
        <title>Lysine acetylation targets protein complexes and co-regulates major cellular functions.</title>
        <authorList>
            <person name="Choudhary C."/>
            <person name="Kumar C."/>
            <person name="Gnad F."/>
            <person name="Nielsen M.L."/>
            <person name="Rehman M."/>
            <person name="Walther T.C."/>
            <person name="Olsen J.V."/>
            <person name="Mann M."/>
        </authorList>
    </citation>
    <scope>ACETYLATION [LARGE SCALE ANALYSIS] AT LYS-681 AND LYS-2576</scope>
    <scope>IDENTIFICATION BY MASS SPECTROMETRY [LARGE SCALE ANALYSIS]</scope>
</reference>
<reference key="29">
    <citation type="journal article" date="2010" name="Sci. Signal.">
        <title>Quantitative phosphoproteomics reveals widespread full phosphorylation site occupancy during mitosis.</title>
        <authorList>
            <person name="Olsen J.V."/>
            <person name="Vermeulen M."/>
            <person name="Santamaria A."/>
            <person name="Kumar C."/>
            <person name="Miller M.L."/>
            <person name="Jensen L.J."/>
            <person name="Gnad F."/>
            <person name="Cox J."/>
            <person name="Jensen T.S."/>
            <person name="Nigg E.A."/>
            <person name="Brunak S."/>
            <person name="Mann M."/>
        </authorList>
    </citation>
    <scope>PHOSPHORYLATION [LARGE SCALE ANALYSIS] AT THR-519; SER-730; SER-886; SER-932; SER-983; SER-1316; SER-1433; SER-2369; SER-2465 AND SER-2478</scope>
    <scope>IDENTIFICATION BY MASS SPECTROMETRY [LARGE SCALE ANALYSIS]</scope>
    <source>
        <tissue>Cervix carcinoma</tissue>
    </source>
</reference>
<reference key="30">
    <citation type="journal article" date="2011" name="BMC Syst. Biol.">
        <title>Initial characterization of the human central proteome.</title>
        <authorList>
            <person name="Burkard T.R."/>
            <person name="Planyavsky M."/>
            <person name="Kaupe I."/>
            <person name="Breitwieser F.P."/>
            <person name="Buerckstuemmer T."/>
            <person name="Bennett K.L."/>
            <person name="Superti-Furga G."/>
            <person name="Colinge J."/>
        </authorList>
    </citation>
    <scope>IDENTIFICATION BY MASS SPECTROMETRY [LARGE SCALE ANALYSIS]</scope>
</reference>
<reference key="31">
    <citation type="journal article" date="2011" name="Sci. Signal.">
        <title>System-wide temporal characterization of the proteome and phosphoproteome of human embryonic stem cell differentiation.</title>
        <authorList>
            <person name="Rigbolt K.T."/>
            <person name="Prokhorova T.A."/>
            <person name="Akimov V."/>
            <person name="Henningsen J."/>
            <person name="Johansen P.T."/>
            <person name="Kratchmarova I."/>
            <person name="Kassem M."/>
            <person name="Mann M."/>
            <person name="Olsen J.V."/>
            <person name="Blagoev B."/>
        </authorList>
    </citation>
    <scope>IDENTIFICATION BY MASS SPECTROMETRY [LARGE SCALE ANALYSIS]</scope>
</reference>
<reference key="32">
    <citation type="journal article" date="2012" name="Proc. Natl. Acad. Sci. U.S.A.">
        <title>N-terminal acetylome analyses and functional insights of the N-terminal acetyltransferase NatB.</title>
        <authorList>
            <person name="Van Damme P."/>
            <person name="Lasa M."/>
            <person name="Polevoda B."/>
            <person name="Gazquez C."/>
            <person name="Elosegui-Artola A."/>
            <person name="Kim D.S."/>
            <person name="De Juan-Pardo E."/>
            <person name="Demeyer K."/>
            <person name="Hole K."/>
            <person name="Larrea E."/>
            <person name="Timmerman E."/>
            <person name="Prieto J."/>
            <person name="Arnesen T."/>
            <person name="Sherman F."/>
            <person name="Gevaert K."/>
            <person name="Aldabe R."/>
        </authorList>
    </citation>
    <scope>IDENTIFICATION BY MASS SPECTROMETRY [LARGE SCALE ANALYSIS]</scope>
</reference>
<reference key="33">
    <citation type="journal article" date="2013" name="J. Proteome Res.">
        <title>Toward a comprehensive characterization of a human cancer cell phosphoproteome.</title>
        <authorList>
            <person name="Zhou H."/>
            <person name="Di Palma S."/>
            <person name="Preisinger C."/>
            <person name="Peng M."/>
            <person name="Polat A.N."/>
            <person name="Heck A.J."/>
            <person name="Mohammed S."/>
        </authorList>
    </citation>
    <scope>PHOSPHORYLATION [LARGE SCALE ANALYSIS] AT SER-983; SER-1433; SER-1505; SER-2083; SER-2107; SER-2465; SER-2478 AND SER-2481</scope>
    <scope>IDENTIFICATION BY MASS SPECTROMETRY [LARGE SCALE ANALYSIS]</scope>
    <source>
        <tissue>Cervix carcinoma</tissue>
        <tissue>Erythroleukemia</tissue>
    </source>
</reference>
<reference key="34">
    <citation type="journal article" date="2014" name="J. Proteomics">
        <title>An enzyme assisted RP-RPLC approach for in-depth analysis of human liver phosphoproteome.</title>
        <authorList>
            <person name="Bian Y."/>
            <person name="Song C."/>
            <person name="Cheng K."/>
            <person name="Dong M."/>
            <person name="Wang F."/>
            <person name="Huang J."/>
            <person name="Sun D."/>
            <person name="Wang L."/>
            <person name="Ye M."/>
            <person name="Zou H."/>
        </authorList>
    </citation>
    <scope>PHOSPHORYLATION [LARGE SCALE ANALYSIS] AT THR-216; THR-1307; SER-1316; SER-2107; SER-2113 AND SER-2492</scope>
    <scope>PHOSPHORYLATION [LARGE SCALE ANALYSIS] AT SER-1474 (ISOFORM 8)</scope>
    <scope>IDENTIFICATION BY MASS SPECTROMETRY [LARGE SCALE ANALYSIS]</scope>
    <source>
        <tissue>Liver</tissue>
    </source>
</reference>
<reference key="35">
    <citation type="journal article" date="2009" name="J. Mol. Biol.">
        <title>Disease-associated substitutions in the filamin B actin binding domain confer enhanced actin binding affinity in the absence of major structural disturbance: Insights from the crystal structures of filamin B actin binding domains.</title>
        <authorList>
            <person name="Sawyer G.M."/>
            <person name="Clark A.R."/>
            <person name="Robertson S.P."/>
            <person name="Sutherland-Smith A.J."/>
        </authorList>
    </citation>
    <scope>X-RAY CRYSTALLOGRAPHY (1.85 ANGSTROMS) OF 2-242</scope>
</reference>
<reference key="36">
    <citation type="submission" date="2009-02" db="PDB data bank">
        <title>Solution structure of the 9th through 24th filamin domains from human filamin-B.</title>
        <authorList>
            <consortium name="RIKEN structural genomics initiative (RSGI)"/>
        </authorList>
    </citation>
    <scope>STRUCTURE BY NMR OF 1017-1721; 1736-2488 AND 2509-2602</scope>
</reference>
<reference key="37">
    <citation type="journal article" date="2004" name="Nat. Genet.">
        <title>Mutations in the gene encoding filamin B disrupt vertebral segmentation, joint formation and skeletogenesis.</title>
        <authorList>
            <person name="Krakow D."/>
            <person name="Robertson S.P."/>
            <person name="King L.M."/>
            <person name="Morgan T."/>
            <person name="Sebald E.T."/>
            <person name="Bertolotto C."/>
            <person name="Wachsmann-Hogiu S."/>
            <person name="Acuna D."/>
            <person name="Shapiro S.S."/>
            <person name="Takafuta T."/>
            <person name="Aftimos S."/>
            <person name="Kim C.A."/>
            <person name="Firth H."/>
            <person name="Steiner C.E."/>
            <person name="Cormier-Daire V."/>
            <person name="Superti-Furga A."/>
            <person name="Bonafe L."/>
            <person name="Graham J.M. Jr."/>
            <person name="Grix A."/>
            <person name="Bacino C.A."/>
            <person name="Allanson J."/>
            <person name="Bialer M.G."/>
            <person name="Lachman R.S."/>
            <person name="Rimoin D.L."/>
            <person name="Cohn D.H."/>
        </authorList>
    </citation>
    <scope>INVOLVEMENT IN SCT</scope>
    <scope>VARIANTS LRS CYS-161; LYS-227; ASN-1571 DEL; ARG-1586 AND SER-1691</scope>
    <scope>VARIANTS AO1 VAL-173 AND PRO-188</scope>
    <scope>VARIANT AO3 ARG-751</scope>
    <scope>VARIANT AO1/AO3 VAL-202</scope>
</reference>
<reference key="38">
    <citation type="submission" date="2007-08" db="PDB data bank">
        <title>Solution structure of filamin domains from human filamin-B.</title>
        <authorList>
            <consortium name="RIKEN structural genomics initiative (RSGI)"/>
        </authorList>
    </citation>
    <scope>STRUCTURE BY NMR OF 1017-2602</scope>
</reference>
<reference key="39">
    <citation type="journal article" date="2005" name="J. Med. Genet.">
        <title>Mutations in FLNB cause boomerang dysplasia.</title>
        <authorList>
            <person name="Bicknell L.S."/>
            <person name="Morgan T."/>
            <person name="Bonafe L."/>
            <person name="Wessels M.W."/>
            <person name="Bialer M.G."/>
            <person name="Willems P.J."/>
            <person name="Cohn D.H."/>
            <person name="Krakow D."/>
            <person name="Robertson S.P."/>
        </authorList>
    </citation>
    <scope>VARIANTS BOOMD ARG-171 AND PRO-235</scope>
</reference>
<reference key="40">
    <citation type="journal article" date="2006" name="Science">
        <title>The consensus coding sequences of human breast and colorectal cancers.</title>
        <authorList>
            <person name="Sjoeblom T."/>
            <person name="Jones S."/>
            <person name="Wood L.D."/>
            <person name="Parsons D.W."/>
            <person name="Lin J."/>
            <person name="Barber T.D."/>
            <person name="Mandelker D."/>
            <person name="Leary R.J."/>
            <person name="Ptak J."/>
            <person name="Silliman N."/>
            <person name="Szabo S."/>
            <person name="Buckhaults P."/>
            <person name="Farrell C."/>
            <person name="Meeh P."/>
            <person name="Markowitz S.D."/>
            <person name="Willis J."/>
            <person name="Dawson D."/>
            <person name="Willson J.K.V."/>
            <person name="Gazdar A.F."/>
            <person name="Hartigan J."/>
            <person name="Wu L."/>
            <person name="Liu C."/>
            <person name="Parmigiani G."/>
            <person name="Park B.H."/>
            <person name="Bachman K.E."/>
            <person name="Papadopoulos N."/>
            <person name="Vogelstein B."/>
            <person name="Kinzler K.W."/>
            <person name="Velculescu V.E."/>
        </authorList>
    </citation>
    <scope>VARIANTS [LARGE SCALE ANALYSIS] GLN-566; LYS-663; LYS-703 AND GLY-1534</scope>
</reference>
<reference key="41">
    <citation type="journal article" date="2007" name="J. Med. Genet.">
        <title>A molecular and clinical study of Larsen syndrome caused by mutations in FLNB.</title>
        <authorList>
            <person name="Bicknell L.S."/>
            <person name="Farrington-Rock C."/>
            <person name="Shafeghati Y."/>
            <person name="Rump P."/>
            <person name="Alanay Y."/>
            <person name="Alembik Y."/>
            <person name="Al-Madani N."/>
            <person name="Firth H."/>
            <person name="Karimi-Nejad M.H."/>
            <person name="Kim C.A."/>
            <person name="Leask K."/>
            <person name="Maisenbacher M."/>
            <person name="Moran E."/>
            <person name="Pappas J.G."/>
            <person name="Prontera P."/>
            <person name="de Ravel T."/>
            <person name="Fryns J.-P."/>
            <person name="Sweeney E."/>
            <person name="Fryer A."/>
            <person name="Unger S."/>
            <person name="Wilson L.C."/>
            <person name="Lachman R.S."/>
            <person name="Rimoin D.L."/>
            <person name="Cohn D.H."/>
            <person name="Krakow D."/>
            <person name="Robertson S.P."/>
        </authorList>
    </citation>
    <scope>VARIANTS LRS CYS-161; SER-168; LYS-227; VAL-234; SER-361; GLU-363; ARG-1431; ASN-1571 DEL; ARG-1586; ASP-1592; LEU-1603; SER-1691 AND ARG-1834</scope>
</reference>
<sequence>MPVTEKDLAEDAPWKKIQQNTFTRWCNEHLKCVNKRIGNLQTDLSDGLRLIALLEVLSQKRMYRKYHQRPTFRQMQLENVSVALEFLDRESIKLVSIDSKAIVDGNLKLILGLVWTLILHYSISMPVWEDEGDDDAKKQTPKQRLLGWIQNKIPYLPITNFNQNWQDGKALGALVDSCAPGLCPDWESWDPQKPVDNAREAMQQADDWLGVPQVITPEEIIHPDVDEHSVMTYLSQFPKAKLKPGAPLKPKLNPKKARAYGRGIEPTGNMVKQPAKFTVDTISAGQGDVMVFVEDPEGNKEEAQVTPDSDKNKTYSVEYLPKVTGLHKVTVLFAGQHISKSPFEVSVDKAQGDASKVTAKGPGLEAVGNIANKPTYFDIYTAGAGVGDIGVEVEDPQGKNTVELLVEDKGNQVYRCVYKPMQPGPHVVKIFFAGDTIPKSPFVVQVGEACNPNACRASGRGLQPKGVRIRETTDFKVDTKAAGSGELGVTMKGPKGLEELVKQKDFLDGVYAFEYYPSTPGRYSIAITWGGHHIPKSPFEVQVGPEAGMQKVRAWGPGLHGGIVGRSADFVVESIGSEVGSLGFAIEGPSQAKIEYNDQNDGSCDVKYWPKEPGEYAVHIMCDDEDIKDSPYMAFIHPATGGYNPDLVRAYGPGLEKSGCIVNNLAEFTVDPKDAGKAPLKIFAQDGEGQRIDIQMKNRMDGTYACSYTPVKAIKHTIAVVWGGVNIPHSPYRVNIGQGSHPQKVKVFGPGVERSGLKANEPTHFTVDCTEAGEGDVSVGIKCDARVLSEDEEDVDFDIIHNANDTFTVKYVPPAAGRYTIKVLFASQEIPASPFRVKVDPSHDASKVKAEGPGLSKAGVENGKPTHFTVYTKGAGKAPLNVQFNSPLPGDAVKDLDIIDNYDYSHTVKYTPTQQGNMQVLVTYGGDPIPKSPFTVGVAAPLDLSKIKLNGLENRVEVGKDQEFTVDTRGAGGQGKLDVTILSPSRKVVPCLVTPVTGRENSTAKFIPREEGLYAVDVTYDGHPVPGSPYTVEASLPPDPSKVKAHGPGLEGGLVGKPAEFTIDTKGAGTGGLGLTVEGPCEAKIECSDNGDGTCSVSYLPTKPGEYFVNILFEEVHIPGSPFKADIEMPFDPSKVVASGPGLEHGKVGEAGLLSVDCSEAGPGALGLEAVSDSGTKAEVSIQNNKDGTYAVTYVPLTAGMYTLTMKYGGELVPHFPARVKVEPAVDTSRIKVFGPGIEGKDVFREATTDFTVDSRPLTQVGGDHIKAHIANPSGASTECFVTDNADGTYQVEYTPFEKGLHVVEVTYDDVPIPNSPFKVAVTEGCQPSRVQAQGPGLKEAFTNKPNVFTVVTRGAGIGGLGITVEGPSESKINCRDNKDGSCSAEYIPFAPGDYDVNITYGGAHIPGSPFRVPVKDVVDPSKVKIAGPGLGSGVRARVLQSFTVDSSKAGLAPLEVRVLGPRGLVEPVNVVDNGDGTHTVTYTPSQEGPYMVSVKYADEEIPRSPFKVKVLPTYDASKVTASGPGLSSYGVPASLPVDFAIDARDAGEGLLAVQITDQEGKPKRAIVHDNKDGTYAVTYIPDKTGRYMIGVTYGGDDIPLSPYRIRATQTGDASKCLATGPGIASTVKTGEEVGFVVDAKTAGKGKVTCTVLTPDGTEAEADVIENEDGTYDIFYTAAKPGTYVIYVRFGGVDIPNSPFTVMATDGEVTAVEEAPVNACPPGFRPWVTEEAYVPVSDMNGLGFKPFDLVIPFAVRKGEITGEVHMPSGKTATPEIVDNKDGTVTVRYAPTEVGLHEMHIKYMGSHIPESPLQFYVNYPNSGSVSAYGPGLVYGVANKTATFTIVTEDAGEGGLDLAIEGPSKAEISCIDNKDGTCTVTYLPTLPGDYSILVKYNDKHIPGSPFTAKITDDSRRCSQVKLGSAADFLLDISETDLSSLTASIKAPSGRDEPCLLKRLPNNHIGISFIPREVGEHLVSIKKNGNHVANSPVSIMVVQSEIGDARRAKVYGRGLSEGRTFEMSDFIVDTRDAGYGGISLAVEGPSKVDIQTEDLEDGTCKVSYFPTVPGVYIVSTKFADEHVPGSPFTVKISGEGRVKESITRTSRAPSVATVGSICDLNLKIPEINSSDMSAHVTSPSGRVTEAEIVPMGKNSHCVRFVPQEMGVHTVSVKYRGQHVTGSPFQFTVGPLGEGGAHKVRAGGPGLERGEAGVPAEFSIWTREAGAGGLSIAVEGPSKAEITFDDHKNGSCGVSYIAQEPGNYEVSIKFNDEHIPESPYLVPVIAPSDDARRLTVMSLQESGLKVNQPASFAIRLNGAKGKIDAKVHSPSGAVEECHVSELEPDKYAVRFIPHENGVHTIDVKFNGSHVVGSPFKVRVGEPGQAGNPALVSAYGTGLEGGTTGIQSEFFINTTRAGPGTLSVTIEGPSKVKMDCQETPEGYKVMYTPMAPGNYLISVKYGGPNHIVGSPFKAKVTGQRLVSPGSANETSSILVESVTRSSTETCYSAIPKASSDASKVTSKGAGLSKAFVGQKSSFLVDCSKAGSNMLLIGVHGPTTPCEEVSMKHVGNQQYNVTYVVKERGDYVLAVKWGEEHIPGSPFHVTVP</sequence>
<name>FLNB_HUMAN</name>
<keyword id="KW-0002">3D-structure</keyword>
<keyword id="KW-0007">Acetylation</keyword>
<keyword id="KW-0009">Actin-binding</keyword>
<keyword id="KW-0025">Alternative splicing</keyword>
<keyword id="KW-0963">Cytoplasm</keyword>
<keyword id="KW-0206">Cytoskeleton</keyword>
<keyword id="KW-0217">Developmental protein</keyword>
<keyword id="KW-0221">Differentiation</keyword>
<keyword id="KW-0225">Disease variant</keyword>
<keyword id="KW-0242">Dwarfism</keyword>
<keyword id="KW-1017">Isopeptide bond</keyword>
<keyword id="KW-0517">Myogenesis</keyword>
<keyword id="KW-0597">Phosphoprotein</keyword>
<keyword id="KW-1267">Proteomics identification</keyword>
<keyword id="KW-1185">Reference proteome</keyword>
<keyword id="KW-0677">Repeat</keyword>
<keyword id="KW-0832">Ubl conjugation</keyword>
<evidence type="ECO:0000250" key="1"/>
<evidence type="ECO:0000250" key="2">
    <source>
        <dbReference type="UniProtKB" id="Q80X90"/>
    </source>
</evidence>
<evidence type="ECO:0000255" key="3">
    <source>
        <dbReference type="PROSITE-ProRule" id="PRU00044"/>
    </source>
</evidence>
<evidence type="ECO:0000256" key="4">
    <source>
        <dbReference type="SAM" id="MobiDB-lite"/>
    </source>
</evidence>
<evidence type="ECO:0000269" key="5">
    <source>
    </source>
</evidence>
<evidence type="ECO:0000269" key="6">
    <source>
    </source>
</evidence>
<evidence type="ECO:0000269" key="7">
    <source>
    </source>
</evidence>
<evidence type="ECO:0000269" key="8">
    <source>
    </source>
</evidence>
<evidence type="ECO:0000269" key="9">
    <source>
    </source>
</evidence>
<evidence type="ECO:0000269" key="10">
    <source>
    </source>
</evidence>
<evidence type="ECO:0000269" key="11">
    <source>
    </source>
</evidence>
<evidence type="ECO:0000269" key="12">
    <source>
    </source>
</evidence>
<evidence type="ECO:0000269" key="13">
    <source>
    </source>
</evidence>
<evidence type="ECO:0000269" key="14">
    <source>
    </source>
</evidence>
<evidence type="ECO:0000269" key="15">
    <source>
    </source>
</evidence>
<evidence type="ECO:0000269" key="16">
    <source>
    </source>
</evidence>
<evidence type="ECO:0000269" key="17">
    <source>
    </source>
</evidence>
<evidence type="ECO:0000269" key="18">
    <source>
    </source>
</evidence>
<evidence type="ECO:0000269" key="19">
    <source>
    </source>
</evidence>
<evidence type="ECO:0000269" key="20">
    <source>
    </source>
</evidence>
<evidence type="ECO:0000269" key="21">
    <source>
    </source>
</evidence>
<evidence type="ECO:0000269" key="22">
    <source>
    </source>
</evidence>
<evidence type="ECO:0000269" key="23">
    <source>
    </source>
</evidence>
<evidence type="ECO:0000303" key="24">
    <source>
    </source>
</evidence>
<evidence type="ECO:0000303" key="25">
    <source>
    </source>
</evidence>
<evidence type="ECO:0000303" key="26">
    <source>
    </source>
</evidence>
<evidence type="ECO:0000303" key="27">
    <source>
    </source>
</evidence>
<evidence type="ECO:0000305" key="28"/>
<evidence type="ECO:0007744" key="29">
    <source>
    </source>
</evidence>
<evidence type="ECO:0007744" key="30">
    <source>
    </source>
</evidence>
<evidence type="ECO:0007744" key="31">
    <source>
    </source>
</evidence>
<evidence type="ECO:0007744" key="32">
    <source>
    </source>
</evidence>
<evidence type="ECO:0007744" key="33">
    <source>
    </source>
</evidence>
<evidence type="ECO:0007744" key="34">
    <source>
    </source>
</evidence>
<evidence type="ECO:0007744" key="35">
    <source>
    </source>
</evidence>
<evidence type="ECO:0007829" key="36">
    <source>
        <dbReference type="PDB" id="2DI8"/>
    </source>
</evidence>
<evidence type="ECO:0007829" key="37">
    <source>
        <dbReference type="PDB" id="2DI9"/>
    </source>
</evidence>
<evidence type="ECO:0007829" key="38">
    <source>
        <dbReference type="PDB" id="2DIA"/>
    </source>
</evidence>
<evidence type="ECO:0007829" key="39">
    <source>
        <dbReference type="PDB" id="2DIB"/>
    </source>
</evidence>
<evidence type="ECO:0007829" key="40">
    <source>
        <dbReference type="PDB" id="2DIC"/>
    </source>
</evidence>
<evidence type="ECO:0007829" key="41">
    <source>
        <dbReference type="PDB" id="2DJ4"/>
    </source>
</evidence>
<evidence type="ECO:0007829" key="42">
    <source>
        <dbReference type="PDB" id="2DLG"/>
    </source>
</evidence>
<evidence type="ECO:0007829" key="43">
    <source>
        <dbReference type="PDB" id="2DMB"/>
    </source>
</evidence>
<evidence type="ECO:0007829" key="44">
    <source>
        <dbReference type="PDB" id="2DMC"/>
    </source>
</evidence>
<evidence type="ECO:0007829" key="45">
    <source>
        <dbReference type="PDB" id="2E9J"/>
    </source>
</evidence>
<evidence type="ECO:0007829" key="46">
    <source>
        <dbReference type="PDB" id="2EE6"/>
    </source>
</evidence>
<evidence type="ECO:0007829" key="47">
    <source>
        <dbReference type="PDB" id="2EEB"/>
    </source>
</evidence>
<evidence type="ECO:0007829" key="48">
    <source>
        <dbReference type="PDB" id="2EEC"/>
    </source>
</evidence>
<evidence type="ECO:0007829" key="49">
    <source>
        <dbReference type="PDB" id="2EED"/>
    </source>
</evidence>
<evidence type="ECO:0007829" key="50">
    <source>
        <dbReference type="PDB" id="2WA5"/>
    </source>
</evidence>
<evidence type="ECO:0007829" key="51">
    <source>
        <dbReference type="PDB" id="2WA7"/>
    </source>
</evidence>
<evidence type="ECO:0007829" key="52">
    <source>
        <dbReference type="PDB" id="4B7L"/>
    </source>
</evidence>
<evidence type="ECO:0007829" key="53">
    <source>
        <dbReference type="PDB" id="5DCP"/>
    </source>
</evidence>
<gene>
    <name type="primary">FLNB</name>
    <name type="synonym">FLN1L</name>
    <name type="synonym">FLN3</name>
    <name type="synonym">TABP</name>
    <name type="synonym">TAP</name>
</gene>
<comment type="function">
    <text>Connects cell membrane constituents to the actin cytoskeleton. May promote orthogonal branching of actin filaments and links actin filaments to membrane glycoproteins. Anchors various transmembrane proteins to the actin cytoskeleton. Interaction with FLNA may allow neuroblast migration from the ventricular zone into the cortical plate. Various interactions and localizations of isoforms affect myotube morphology and myogenesis. Isoform 6 accelerates muscle differentiation in vitro.</text>
</comment>
<comment type="subunit">
    <text evidence="1 2 5 7 8 9 10 11 14 21 22 23">Homodimer. Interacts with MICALL2 (By similarity). Interacts with RFLNA and RFLNB (By similarity). Isoform 1 interacts with FBLP1, FLNA, FLNC, GP1BA, INPPL1, ITGB1A, PSEN1 and PSEN2. Isoform 3 interacts with ITGB1A, ITGB1D, ITGB3 and ITGB6. Interacts with MYOT and MYOZ1. Interacts with HBV capsid protein. Interacts with ASB2 isoform 1; the interaction targets FLNB for proteasomal degradation (By similarity).</text>
</comment>
<comment type="interaction">
    <interactant intactId="EBI-352089">
        <id>O75369</id>
    </interactant>
    <interactant intactId="EBI-350432">
        <id>P21333</id>
        <label>FLNA</label>
    </interactant>
    <organismsDiffer>false</organismsDiffer>
    <experiments>5</experiments>
</comment>
<comment type="interaction">
    <interactant intactId="EBI-352089">
        <id>O75369</id>
    </interactant>
    <interactant intactId="EBI-352089">
        <id>O75369</id>
        <label>FLNB</label>
    </interactant>
    <organismsDiffer>false</organismsDiffer>
    <experiments>4</experiments>
</comment>
<comment type="interaction">
    <interactant intactId="EBI-352089">
        <id>O75369</id>
    </interactant>
    <interactant intactId="EBI-401755">
        <id>P62993</id>
        <label>GRB2</label>
    </interactant>
    <organismsDiffer>false</organismsDiffer>
    <experiments>2</experiments>
</comment>
<comment type="interaction">
    <interactant intactId="EBI-352089">
        <id>O75369</id>
    </interactant>
    <interactant intactId="EBI-746466">
        <id>P05161</id>
        <label>ISG15</label>
    </interactant>
    <organismsDiffer>false</organismsDiffer>
    <experiments>4</experiments>
</comment>
<comment type="interaction">
    <interactant intactId="EBI-352089">
        <id>O75369</id>
    </interactant>
    <interactant intactId="EBI-49776">
        <id>Q13233</id>
        <label>MAP3K1</label>
    </interactant>
    <organismsDiffer>false</organismsDiffer>
    <experiments>2</experiments>
</comment>
<comment type="interaction">
    <interactant intactId="EBI-352089">
        <id>O75369</id>
    </interactant>
    <interactant intactId="EBI-448104">
        <id>Q9Y6R4</id>
        <label>MAP3K4</label>
    </interactant>
    <organismsDiffer>false</organismsDiffer>
    <experiments>2</experiments>
</comment>
<comment type="interaction">
    <interactant intactId="EBI-352089">
        <id>O75369</id>
    </interactant>
    <interactant intactId="EBI-389883">
        <id>P16333</id>
        <label>NCK1</label>
    </interactant>
    <organismsDiffer>false</organismsDiffer>
    <experiments>3</experiments>
</comment>
<comment type="interaction">
    <interactant intactId="EBI-352089">
        <id>O75369</id>
    </interactant>
    <interactant intactId="EBI-413628">
        <id>P63000</id>
        <label>RAC1</label>
    </interactant>
    <organismsDiffer>false</organismsDiffer>
    <experiments>2</experiments>
</comment>
<comment type="subcellular location">
    <molecule>Isoform 1</molecule>
    <subcellularLocation>
        <location>Cytoplasm</location>
        <location>Cell cortex</location>
    </subcellularLocation>
    <subcellularLocation>
        <location>Cytoplasm</location>
        <location>Cytoskeleton</location>
    </subcellularLocation>
    <subcellularLocation>
        <location>Cytoplasm</location>
        <location>Cytoskeleton</location>
        <location>Stress fiber</location>
    </subcellularLocation>
    <subcellularLocation>
        <location>Cytoplasm</location>
        <location>Myofibril</location>
        <location>Sarcomere</location>
        <location>Z line</location>
    </subcellularLocation>
    <text>In differentiating myotubes, isoform 1, isoform 2 and isoform 3 are localized diffusely throughout the cytoplasm with regions of enrichment at the longitudinal actin stress fiber. In differentiated tubes, isoform 1 is also detected within the Z-lines.</text>
</comment>
<comment type="subcellular location">
    <molecule>Isoform 2</molecule>
    <subcellularLocation>
        <location>Cytoplasm</location>
        <location>Cytoskeleton</location>
        <location>Stress fiber</location>
    </subcellularLocation>
</comment>
<comment type="subcellular location">
    <molecule>Isoform 3</molecule>
    <subcellularLocation>
        <location>Cytoplasm</location>
        <location>Cytoskeleton</location>
        <location>Stress fiber</location>
    </subcellularLocation>
</comment>
<comment type="subcellular location">
    <molecule>Isoform 6</molecule>
    <subcellularLocation>
        <location>Cytoplasm</location>
        <location>Cytoskeleton</location>
    </subcellularLocation>
    <text>Polarized at the periphery of myotubes.</text>
</comment>
<comment type="alternative products">
    <event type="alternative splicing"/>
    <isoform>
        <id>O75369-1</id>
        <name>1</name>
        <name>ABP-278</name>
        <sequence type="displayed"/>
    </isoform>
    <isoform>
        <id>O75369-2</id>
        <name>2</name>
        <name>ABP-276</name>
        <sequence type="described" ref="VSP_008773"/>
    </isoform>
    <isoform>
        <id>O75369-3</id>
        <name>3</name>
        <name>Var-1</name>
        <sequence type="described" ref="VSP_008774"/>
    </isoform>
    <isoform>
        <id>O75369-7</id>
        <name>7</name>
        <sequence type="described" ref="VSP_024113 VSP_024114 VSP_024115"/>
    </isoform>
    <isoform>
        <id>O75369-4</id>
        <name>4</name>
        <name>Var-3</name>
        <sequence type="described" ref="VSP_008775 VSP_008776"/>
    </isoform>
    <isoform>
        <id>O75369-5</id>
        <name>5</name>
        <name>Var-2</name>
        <sequence type="described" ref="VSP_008777 VSP_008778"/>
    </isoform>
    <isoform>
        <id>O75369-6</id>
        <name>6</name>
        <name>Var-1-DeltaH1</name>
        <sequence type="described" ref="VSP_008773 VSP_008774"/>
    </isoform>
    <isoform>
        <id>O75369-8</id>
        <name>8</name>
        <sequence type="described" ref="VSP_043446"/>
    </isoform>
    <isoform>
        <id>O75369-9</id>
        <name>9</name>
        <sequence type="described" ref="VSP_024115"/>
    </isoform>
</comment>
<comment type="tissue specificity">
    <text evidence="8 20 22 23">Ubiquitous. Isoform 1 and isoform 2 are expressed in placenta, bone marrow, brain, umbilical vein endothelial cells (HUVEC), retina and skeletal muscle. Isoform 1 is predominantly expressed in prostate, uterus, liver, thyroid, stomach, lymph node, small intestine, spleen, skeletal muscle, kidney, placenta, pancreas, heart, lung, platelets, endothelial cells, megakaryocytic and erythroleukemic cell lines. Isoform 2 is predominantly expressed in spinal cord, platelet and Daudi cells. Also expressed in thyroid adenoma, neurofibrillary tangles (NFT), senile plaques in the hippocampus and cerebral cortex in Alzheimer disease (AD). Isoform 3 and isoform 6 are expressed predominantly in lung, heart, skeletal muscle, testis, spleen, thymus and leukocytes. Isoform 4 and isoform 5 are expressed in heart.</text>
</comment>
<comment type="domain">
    <text>Comprised of a NH2-terminal actin-binding domain, 24 internally homologous repeats and two hinge regions. Repeat 24 and the second hinge domain are important for dimer formation. The first hinge region prevents binding to ITGA and ITGB subunits.</text>
</comment>
<comment type="PTM">
    <text evidence="18">ISGylation prevents ability to interact with the upstream activators of the JNK cascade and inhibits IFNA-induced JNK signaling.</text>
</comment>
<comment type="PTM">
    <text evidence="19">Ubiquitination by a SCF-like complex containing ASB2 isoform 1 leads to proteasomal degradation which promotes muscle differentiation.</text>
</comment>
<comment type="disease">
    <text>Interaction with FLNA may compensate for dysfunctional FLNA homodimer in the periventricular nodular heterotopia (PVNH) disorder.</text>
</comment>
<comment type="disease" evidence="12">
    <disease id="DI-00142">
        <name>Atelosteogenesis 1</name>
        <acronym>AO1</acronym>
        <description>A lethal chondrodysplasia characterized by distal hypoplasia of the humeri and femurs, hypoplasia of the mid-thoracic spine, occasionally complete lack of ossification of single hand bones, and the finding in cartilage of multiple degenerated chondrocytes which are encapsulated in fibrous tissue.</description>
        <dbReference type="MIM" id="108720"/>
    </disease>
    <text>The disease is caused by variants affecting the gene represented in this entry.</text>
</comment>
<comment type="disease" evidence="12">
    <disease id="DI-00144">
        <name>Atelosteogenesis 3</name>
        <acronym>AO3</acronym>
        <description>A short-limb lethal skeletal dysplasia with vertebral abnormalities, disharmonious skeletal maturation, poorly modeled long bones and joint dislocations. Recurrent respiratory insufficiency and/or infections usually result in early death.</description>
        <dbReference type="MIM" id="108721"/>
    </disease>
    <text>The disease is caused by variants affecting the gene represented in this entry.</text>
</comment>
<comment type="disease" evidence="13">
    <disease id="DI-01289">
        <name>Boomerang dysplasia</name>
        <acronym>BOOMD</acronym>
        <description>A perinatal lethal osteochondrodysplasia characterized by absence or underossification of the limb bones and vertebrae. Patients manifest dwarfism with short, bowed, rigid limbs and characteristic facies. Boomerang dysplasia is distinguished from atelosteogenesis on the basis of a more severe defect in mineralization, with complete absence of ossification in some limb elements and vertebral segments.</description>
        <dbReference type="MIM" id="112310"/>
    </disease>
    <text>The disease is caused by variants affecting the gene represented in this entry.</text>
</comment>
<comment type="disease" evidence="12 15">
    <disease id="DI-01214">
        <name>Larsen syndrome</name>
        <acronym>LRS</acronym>
        <description>An osteochondrodysplasia characterized by large-joint dislocations and characteristic craniofacial abnormalities. The cardinal features of the condition are dislocations of the hip, knee and elbow joints, with equinovarus or equinovalgus foot deformities. Spatula-shaped fingers, most marked in the thumb, are also present. Craniofacial anomalies include hypertelorism, prominence of the forehead, a depressed nasal bridge, and a flattened midface. Cleft palate and short stature are often associated features. Spinal anomalies include scoliosis and cervical kyphosis. Hearing loss is a well-recognized complication.</description>
        <dbReference type="MIM" id="150250"/>
    </disease>
    <text>The disease is caused by variants affecting the gene represented in this entry.</text>
</comment>
<comment type="disease" evidence="12">
    <disease id="DI-02329">
        <name>Spondylocarpotarsal synostosis syndrome</name>
        <acronym>SCT</acronym>
        <description>Disorder characterized by short stature and vertebral, carpal and tarsal fusions.</description>
        <dbReference type="MIM" id="272460"/>
    </disease>
    <text>The disease is caused by variants affecting the gene represented in this entry.</text>
</comment>
<comment type="miscellaneous">
    <molecule>Isoform 2</molecule>
    <text evidence="28">May be due to exon skipping.</text>
</comment>
<comment type="miscellaneous">
    <molecule>Isoform 3</molecule>
    <text evidence="28">May be due to exon skipping.</text>
</comment>
<comment type="miscellaneous">
    <molecule>Isoform 5</molecule>
    <text evidence="28">May be due to competing donor splice sites.</text>
</comment>
<comment type="miscellaneous">
    <molecule>Isoform 6</molecule>
    <text evidence="28">May be due to exon skipping.</text>
</comment>
<comment type="similarity">
    <text evidence="28">Belongs to the filamin family.</text>
</comment>
<comment type="sequence caution" evidence="28">
    <conflict type="frameshift">
        <sequence resource="EMBL-CDS" id="AAA35505"/>
    </conflict>
</comment>
<protein>
    <recommendedName>
        <fullName>Filamin-B</fullName>
        <shortName>FLN-B</shortName>
    </recommendedName>
    <alternativeName>
        <fullName>ABP-278</fullName>
    </alternativeName>
    <alternativeName>
        <fullName>ABP-280 homolog</fullName>
    </alternativeName>
    <alternativeName>
        <fullName>Actin-binding-like protein</fullName>
    </alternativeName>
    <alternativeName>
        <fullName>Beta-filamin</fullName>
    </alternativeName>
    <alternativeName>
        <fullName>Filamin homolog 1</fullName>
        <shortName>Fh1</shortName>
    </alternativeName>
    <alternativeName>
        <fullName>Filamin-3</fullName>
    </alternativeName>
    <alternativeName>
        <fullName>Thyroid autoantigen</fullName>
    </alternativeName>
    <alternativeName>
        <fullName>Truncated actin-binding protein</fullName>
        <shortName>Truncated ABP</shortName>
    </alternativeName>
</protein>
<organism>
    <name type="scientific">Homo sapiens</name>
    <name type="common">Human</name>
    <dbReference type="NCBI Taxonomy" id="9606"/>
    <lineage>
        <taxon>Eukaryota</taxon>
        <taxon>Metazoa</taxon>
        <taxon>Chordata</taxon>
        <taxon>Craniata</taxon>
        <taxon>Vertebrata</taxon>
        <taxon>Euteleostomi</taxon>
        <taxon>Mammalia</taxon>
        <taxon>Eutheria</taxon>
        <taxon>Euarchontoglires</taxon>
        <taxon>Primates</taxon>
        <taxon>Haplorrhini</taxon>
        <taxon>Catarrhini</taxon>
        <taxon>Hominidae</taxon>
        <taxon>Homo</taxon>
    </lineage>
</organism>
<feature type="chain" id="PRO_0000087298" description="Filamin-B">
    <location>
        <begin position="1"/>
        <end position="2602"/>
    </location>
</feature>
<feature type="domain" description="Calponin-homology (CH) 1" evidence="3">
    <location>
        <begin position="16"/>
        <end position="122"/>
    </location>
</feature>
<feature type="domain" description="Calponin-homology (CH) 2" evidence="3">
    <location>
        <begin position="139"/>
        <end position="242"/>
    </location>
</feature>
<feature type="repeat" description="Filamin 1">
    <location>
        <begin position="249"/>
        <end position="347"/>
    </location>
</feature>
<feature type="repeat" description="Filamin 2">
    <location>
        <begin position="349"/>
        <end position="446"/>
    </location>
</feature>
<feature type="repeat" description="Filamin 3">
    <location>
        <begin position="447"/>
        <end position="543"/>
    </location>
</feature>
<feature type="repeat" description="Filamin 4">
    <location>
        <begin position="544"/>
        <end position="636"/>
    </location>
</feature>
<feature type="repeat" description="Filamin 5">
    <location>
        <begin position="640"/>
        <end position="736"/>
    </location>
</feature>
<feature type="repeat" description="Filamin 6">
    <location>
        <begin position="737"/>
        <end position="839"/>
    </location>
</feature>
<feature type="repeat" description="Filamin 7">
    <location>
        <begin position="840"/>
        <end position="938"/>
    </location>
</feature>
<feature type="repeat" description="Filamin 8">
    <location>
        <begin position="939"/>
        <end position="1034"/>
    </location>
</feature>
<feature type="repeat" description="Filamin 9">
    <location>
        <begin position="1035"/>
        <end position="1127"/>
    </location>
</feature>
<feature type="repeat" description="Filamin 10">
    <location>
        <begin position="1128"/>
        <end position="1222"/>
    </location>
</feature>
<feature type="repeat" description="Filamin 11">
    <location>
        <begin position="1223"/>
        <end position="1322"/>
    </location>
</feature>
<feature type="repeat" description="Filamin 12">
    <location>
        <begin position="1323"/>
        <end position="1415"/>
    </location>
</feature>
<feature type="repeat" description="Filamin 13">
    <location>
        <begin position="1416"/>
        <end position="1511"/>
    </location>
</feature>
<feature type="repeat" description="Filamin 14">
    <location>
        <begin position="1512"/>
        <end position="1608"/>
    </location>
</feature>
<feature type="repeat" description="Filamin 15">
    <location>
        <begin position="1609"/>
        <end position="1704"/>
    </location>
</feature>
<feature type="repeat" description="Filamin 16">
    <location>
        <begin position="1729"/>
        <end position="1813"/>
    </location>
</feature>
<feature type="repeat" description="Filamin 17">
    <location>
        <begin position="1816"/>
        <end position="1908"/>
    </location>
</feature>
<feature type="repeat" description="Filamin 18">
    <location>
        <begin position="1919"/>
        <end position="1994"/>
    </location>
</feature>
<feature type="repeat" description="Filamin 19">
    <location>
        <begin position="1997"/>
        <end position="2089"/>
    </location>
</feature>
<feature type="repeat" description="Filamin 20">
    <location>
        <begin position="2091"/>
        <end position="2185"/>
    </location>
</feature>
<feature type="repeat" description="Filamin 21">
    <location>
        <begin position="2188"/>
        <end position="2280"/>
    </location>
</feature>
<feature type="repeat" description="Filamin 22">
    <location>
        <begin position="2282"/>
        <end position="2375"/>
    </location>
</feature>
<feature type="repeat" description="Filamin 23">
    <location>
        <begin position="2379"/>
        <end position="2471"/>
    </location>
</feature>
<feature type="repeat" description="Filamin 24">
    <location>
        <begin position="2507"/>
        <end position="2601"/>
    </location>
</feature>
<feature type="region of interest" description="Actin-binding">
    <location>
        <begin position="1"/>
        <end position="239"/>
    </location>
</feature>
<feature type="region of interest" description="Disordered" evidence="4">
    <location>
        <begin position="244"/>
        <end position="267"/>
    </location>
</feature>
<feature type="region of interest" description="Interaction with FBLP1" evidence="10">
    <location>
        <begin position="1128"/>
        <end position="1511"/>
    </location>
</feature>
<feature type="region of interest" description="Hinge 1" evidence="1">
    <location>
        <begin position="1705"/>
        <end position="1728"/>
    </location>
</feature>
<feature type="region of interest" description="Interaction with the cytoplasmic tail of GP1BA">
    <location>
        <begin position="1862"/>
        <end position="2148"/>
    </location>
</feature>
<feature type="region of interest" description="Interaction with FLNA 1">
    <location>
        <begin position="2060"/>
        <end position="2225"/>
    </location>
</feature>
<feature type="region of interest" description="Interaction with INPPL1" evidence="7">
    <location>
        <begin position="2130"/>
        <end position="2602"/>
    </location>
</feature>
<feature type="region of interest" description="Self-association site, tail" evidence="1">
    <location>
        <begin position="2472"/>
        <end position="2602"/>
    </location>
</feature>
<feature type="region of interest" description="Hinge 2" evidence="1">
    <location>
        <begin position="2472"/>
        <end position="2506"/>
    </location>
</feature>
<feature type="region of interest" description="Interaction with FLNA 2">
    <location>
        <begin position="2507"/>
        <end position="2602"/>
    </location>
</feature>
<feature type="modified residue" description="Phosphothreonine" evidence="35">
    <location>
        <position position="216"/>
    </location>
</feature>
<feature type="modified residue" description="Phosphothreonine" evidence="30 33">
    <location>
        <position position="519"/>
    </location>
</feature>
<feature type="modified residue" description="N6-acetyllysine" evidence="31">
    <location>
        <position position="681"/>
    </location>
</feature>
<feature type="modified residue" description="Phosphoserine" evidence="33">
    <location>
        <position position="730"/>
    </location>
</feature>
<feature type="modified residue" description="Phosphoserine" evidence="33">
    <location>
        <position position="886"/>
    </location>
</feature>
<feature type="modified residue" description="Phosphoserine" evidence="33">
    <location>
        <position position="932"/>
    </location>
</feature>
<feature type="modified residue" description="Phosphoserine" evidence="29 30 32 33 34">
    <location>
        <position position="983"/>
    </location>
</feature>
<feature type="modified residue" description="Phosphoserine" evidence="30">
    <location>
        <position position="1028"/>
    </location>
</feature>
<feature type="modified residue" description="Phosphothreonine" evidence="35">
    <location>
        <position position="1307"/>
    </location>
</feature>
<feature type="modified residue" description="Phosphoserine" evidence="30 33 35">
    <location>
        <position position="1316"/>
    </location>
</feature>
<feature type="modified residue" description="Phosphoserine" evidence="33 34">
    <location>
        <position position="1433"/>
    </location>
</feature>
<feature type="modified residue" description="Phosphoserine" evidence="30 34">
    <location>
        <position position="1505"/>
    </location>
</feature>
<feature type="modified residue" description="Phosphoserine" evidence="30">
    <location>
        <position position="1602"/>
    </location>
</feature>
<feature type="modified residue" description="N6-acetyllysine" evidence="2">
    <location>
        <position position="1780"/>
    </location>
</feature>
<feature type="modified residue" description="Phosphoserine" evidence="30 34">
    <location>
        <position position="2083"/>
    </location>
</feature>
<feature type="modified residue" description="Phosphoserine" evidence="30 34 35">
    <location>
        <position position="2107"/>
    </location>
</feature>
<feature type="modified residue" description="Phosphoserine" evidence="35">
    <location>
        <position position="2113"/>
    </location>
</feature>
<feature type="modified residue" description="Phosphoserine" evidence="33">
    <location>
        <position position="2369"/>
    </location>
</feature>
<feature type="modified residue" description="Phosphoserine" evidence="33 34">
    <location>
        <position position="2465"/>
    </location>
</feature>
<feature type="modified residue" description="Phosphoserine" evidence="30 32 33 34">
    <location>
        <position position="2478"/>
    </location>
</feature>
<feature type="modified residue" description="Phosphoserine" evidence="30 34">
    <location>
        <position position="2481"/>
    </location>
</feature>
<feature type="modified residue" description="Phosphoserine" evidence="35">
    <location>
        <position position="2492"/>
    </location>
</feature>
<feature type="modified residue" description="N6-succinyllysine" evidence="2">
    <location>
        <position position="2518"/>
    </location>
</feature>
<feature type="modified residue" description="N6-succinyllysine" evidence="2">
    <location>
        <position position="2524"/>
    </location>
</feature>
<feature type="modified residue" description="N6-acetyllysine" evidence="31">
    <location>
        <position position="2576"/>
    </location>
</feature>
<feature type="cross-link" description="Glycyl lysine isopeptide (Lys-Gly) (interchain with G-Cter in ISG15)" evidence="18">
    <location>
        <position position="2468"/>
    </location>
</feature>
<feature type="splice variant" id="VSP_024113" description="In isoform 7." evidence="25">
    <location>
        <begin position="1"/>
        <end position="169"/>
    </location>
</feature>
<feature type="splice variant" id="VSP_024114" description="In isoform 7." evidence="25">
    <original>ALGALVDSCAPG</original>
    <variation>MQEHSTRRRSLS</variation>
    <location>
        <begin position="170"/>
        <end position="181"/>
    </location>
</feature>
<feature type="splice variant" id="VSP_043446" description="In isoform 8." evidence="24 26">
    <original>R</original>
    <variation>RADDTDSQSWRSPLKALSEFFKGDPKGDFNKT</variation>
    <location>
        <position position="1463"/>
    </location>
</feature>
<feature type="splice variant" id="VSP_008773" description="In isoform 2 and isoform 6." evidence="24 26 27">
    <location>
        <begin position="1704"/>
        <end position="1727"/>
    </location>
</feature>
<feature type="splice variant" id="VSP_024115" description="In isoform 7 and isoform 9." evidence="24 25 26">
    <location>
        <begin position="1717"/>
        <end position="1727"/>
    </location>
</feature>
<feature type="splice variant" id="VSP_008774" description="In isoform 3 and isoform 6." evidence="28">
    <location>
        <begin position="2081"/>
        <end position="2121"/>
    </location>
</feature>
<feature type="splice variant" id="VSP_008775" description="In isoform 4." evidence="28">
    <original>EINSSDMSAHVTSPSGRVTEAEIVPMGK</original>
    <variation>GVRVMNCSAQILWGWRVQFHTGSRNQQQ</variation>
    <location>
        <begin position="2123"/>
        <end position="2150"/>
    </location>
</feature>
<feature type="splice variant" id="VSP_008777" description="In isoform 5." evidence="28">
    <original>EINSSDMSAHVTSPSGRVTEAEIV</original>
    <variation>GVRVMNCSAQILWGWRVQFHTGSR</variation>
    <location>
        <begin position="2123"/>
        <end position="2146"/>
    </location>
</feature>
<feature type="splice variant" id="VSP_008778" description="In isoform 5." evidence="28">
    <location>
        <begin position="2147"/>
        <end position="2602"/>
    </location>
</feature>
<feature type="splice variant" id="VSP_008776" description="In isoform 4." evidence="28">
    <location>
        <begin position="2151"/>
        <end position="2602"/>
    </location>
</feature>
<feature type="sequence variant" id="VAR_033069" description="In LRS; dbSNP:rs80356506." evidence="12 15">
    <original>F</original>
    <variation>C</variation>
    <location>
        <position position="161"/>
    </location>
</feature>
<feature type="sequence variant" id="VAR_033070" description="In LRS; dbSNP:rs80356504." evidence="15">
    <original>G</original>
    <variation>S</variation>
    <location>
        <position position="168"/>
    </location>
</feature>
<feature type="sequence variant" id="VAR_033071" description="In BOOMD; dbSNP:rs80356494." evidence="13">
    <original>L</original>
    <variation>R</variation>
    <location>
        <position position="171"/>
    </location>
</feature>
<feature type="sequence variant" id="VAR_033072" description="In AO1; dbSNP:rs121908894." evidence="12">
    <original>A</original>
    <variation>V</variation>
    <location>
        <position position="173"/>
    </location>
</feature>
<feature type="sequence variant" id="VAR_033073" description="In AO1." evidence="12">
    <original>S</original>
    <variation>P</variation>
    <location>
        <position position="188"/>
    </location>
</feature>
<feature type="sequence variant" id="VAR_033074" description="In AO1 and AO3; dbSNP:rs121908895." evidence="12">
    <original>M</original>
    <variation>V</variation>
    <location>
        <position position="202"/>
    </location>
</feature>
<feature type="sequence variant" id="VAR_033075" description="In LRS; dbSNP:rs80356508." evidence="12 15">
    <original>E</original>
    <variation>K</variation>
    <location>
        <position position="227"/>
    </location>
</feature>
<feature type="sequence variant" id="VAR_033076" description="In LRS; dbSNP:rs80356507." evidence="15">
    <original>L</original>
    <variation>V</variation>
    <location>
        <position position="234"/>
    </location>
</feature>
<feature type="sequence variant" id="VAR_033077" description="In BOOMD; dbSNP:rs121908896." evidence="13">
    <original>S</original>
    <variation>P</variation>
    <location>
        <position position="235"/>
    </location>
</feature>
<feature type="sequence variant" id="VAR_033078" description="In LRS; dbSNP:rs80356509." evidence="15">
    <original>G</original>
    <variation>S</variation>
    <location>
        <position position="361"/>
    </location>
</feature>
<feature type="sequence variant" id="VAR_033079" description="In LRS; dbSNP:rs80356510." evidence="15">
    <original>G</original>
    <variation>E</variation>
    <location>
        <position position="363"/>
    </location>
</feature>
<feature type="sequence variant" id="VAR_035917" description="In a breast cancer sample; somatic mutation; dbSNP:rs150747960." evidence="16">
    <original>R</original>
    <variation>Q</variation>
    <location>
        <position position="566"/>
    </location>
</feature>
<feature type="sequence variant" id="VAR_035918" description="In a breast cancer sample; somatic mutation." evidence="16">
    <original>N</original>
    <variation>K</variation>
    <location>
        <position position="663"/>
    </location>
</feature>
<feature type="sequence variant" id="VAR_035919" description="In a breast cancer sample; somatic mutation." evidence="16">
    <original>T</original>
    <variation>K</variation>
    <location>
        <position position="703"/>
    </location>
</feature>
<feature type="sequence variant" id="VAR_033080" description="In AO3; dbSNP:rs28937587." evidence="12">
    <original>G</original>
    <variation>R</variation>
    <location>
        <position position="751"/>
    </location>
</feature>
<feature type="sequence variant" id="VAR_017182" description="In dbSNP:rs2276742.">
    <original>V</original>
    <variation>M</variation>
    <location>
        <position position="1018"/>
    </location>
</feature>
<feature type="sequence variant" id="VAR_017183" description="In dbSNP:rs1131356." evidence="6 17 22">
    <original>D</original>
    <variation>N</variation>
    <location>
        <position position="1157"/>
    </location>
</feature>
<feature type="sequence variant" id="VAR_031392" description="In dbSNP:rs17058845.">
    <original>E</original>
    <variation>K</variation>
    <location>
        <position position="1179"/>
    </location>
</feature>
<feature type="sequence variant" id="VAR_033081" description="In LRS; dbSNP:rs80356511." evidence="15">
    <original>L</original>
    <variation>R</variation>
    <location>
        <position position="1431"/>
    </location>
</feature>
<feature type="sequence variant" id="VAR_031393" description="In dbSNP:rs12632456." evidence="6 17 22">
    <original>V</original>
    <variation>M</variation>
    <location>
        <position position="1471"/>
    </location>
</feature>
<feature type="sequence variant" id="VAR_035920" description="In a breast cancer sample; somatic mutation." evidence="16">
    <original>A</original>
    <variation>G</variation>
    <location>
        <position position="1534"/>
    </location>
</feature>
<feature type="sequence variant" id="VAR_033082" description="In LRS; dbSNP:rs80356512." evidence="12 15">
    <location>
        <position position="1571"/>
    </location>
</feature>
<feature type="sequence variant" id="VAR_033083" description="In LRS; dbSNP:rs80356513." evidence="12 15">
    <original>G</original>
    <variation>R</variation>
    <location>
        <position position="1586"/>
    </location>
</feature>
<feature type="sequence variant" id="VAR_033084" description="In LRS; dbSNP:rs80356514." evidence="15">
    <original>V</original>
    <variation>D</variation>
    <location>
        <position position="1592"/>
    </location>
</feature>
<feature type="sequence variant" id="VAR_033085" description="In LRS; dbSNP:rs80356515." evidence="15">
    <original>P</original>
    <variation>L</variation>
    <location>
        <position position="1603"/>
    </location>
</feature>
<feature type="sequence variant" id="VAR_033086" description="In LRS; dbSNP:rs80356503." evidence="12 15">
    <original>G</original>
    <variation>S</variation>
    <location>
        <position position="1691"/>
    </location>
</feature>
<feature type="sequence variant" id="VAR_033087" description="In LRS; dbSNP:rs80356516." evidence="15">
    <original>G</original>
    <variation>R</variation>
    <location>
        <position position="1834"/>
    </location>
</feature>
<feature type="mutagenesis site" description="Cytoplasmic localization." evidence="18">
    <original>K</original>
    <variation>R</variation>
    <location>
        <position position="2468"/>
    </location>
</feature>
<feature type="sequence conflict" description="In Ref. 7; CAE46040." evidence="28" ref="7">
    <original>A</original>
    <variation>T</variation>
    <location>
        <position position="816"/>
    </location>
</feature>
<feature type="sequence conflict" description="In Ref. 7; CAE46040." evidence="28" ref="7">
    <original>Y</original>
    <variation>H</variation>
    <location>
        <position position="924"/>
    </location>
</feature>
<feature type="sequence conflict" description="In Ref. 7; CAE46040." evidence="28" ref="7">
    <original>F</original>
    <variation>L</variation>
    <location>
        <position position="1411"/>
    </location>
</feature>
<feature type="sequence conflict" description="In Ref. 7; CAE46040." evidence="28" ref="7">
    <original>E</original>
    <variation>G</variation>
    <location>
        <position position="1560"/>
    </location>
</feature>
<feature type="sequence conflict" description="In Ref. 4; AAF97046." evidence="28" ref="4">
    <original>L</original>
    <variation>F</variation>
    <location>
        <position position="1953"/>
    </location>
</feature>
<feature type="sequence conflict" description="In Ref. 2; AAC33845." evidence="28" ref="2">
    <original>K</original>
    <variation>R</variation>
    <location>
        <position position="2006"/>
    </location>
</feature>
<feature type="sequence conflict" description="In Ref. 7; CAE46040." evidence="28" ref="7">
    <original>I</original>
    <variation>S</variation>
    <location>
        <position position="2099"/>
    </location>
</feature>
<feature type="sequence conflict" description="In Ref. 4; AAF97046." evidence="28" ref="4">
    <original>K</original>
    <variation>N</variation>
    <location>
        <position position="2170"/>
    </location>
</feature>
<feature type="sequence conflict" description="In Ref. 4; AAF97046 and 7; CAE46040." evidence="28" ref="4 7">
    <original>M</original>
    <variation>V</variation>
    <location>
        <position position="2293"/>
    </location>
</feature>
<feature type="sequence conflict" description="In Ref. 11; CAB70818." evidence="28" ref="11">
    <original>V</original>
    <variation>A</variation>
    <location>
        <position position="2354"/>
    </location>
</feature>
<feature type="sequence conflict" description="In Ref. 13; AAA35505." evidence="28" ref="13">
    <original>S</original>
    <variation>C</variation>
    <location>
        <position position="2487"/>
    </location>
</feature>
<feature type="sequence conflict" description="In Ref. 11; CAB70818." evidence="28" ref="11">
    <original>V</original>
    <variation>A</variation>
    <location>
        <position position="2571"/>
    </location>
</feature>
<feature type="helix" evidence="50">
    <location>
        <begin position="5"/>
        <end position="10"/>
    </location>
</feature>
<feature type="helix" evidence="51">
    <location>
        <begin position="13"/>
        <end position="16"/>
    </location>
</feature>
<feature type="helix" evidence="51">
    <location>
        <begin position="17"/>
        <end position="30"/>
    </location>
</feature>
<feature type="helix" evidence="51">
    <location>
        <begin position="31"/>
        <end position="33"/>
    </location>
</feature>
<feature type="turn" evidence="51">
    <location>
        <begin position="40"/>
        <end position="46"/>
    </location>
</feature>
<feature type="helix" evidence="51">
    <location>
        <begin position="48"/>
        <end position="58"/>
    </location>
</feature>
<feature type="helix" evidence="51">
    <location>
        <begin position="73"/>
        <end position="89"/>
    </location>
</feature>
<feature type="helix" evidence="51">
    <location>
        <begin position="99"/>
        <end position="103"/>
    </location>
</feature>
<feature type="helix" evidence="51">
    <location>
        <begin position="107"/>
        <end position="122"/>
    </location>
</feature>
<feature type="helix" evidence="51">
    <location>
        <begin position="141"/>
        <end position="152"/>
    </location>
</feature>
<feature type="helix" evidence="51">
    <location>
        <begin position="163"/>
        <end position="165"/>
    </location>
</feature>
<feature type="helix" evidence="51">
    <location>
        <begin position="169"/>
        <end position="178"/>
    </location>
</feature>
<feature type="helix" evidence="51">
    <location>
        <begin position="186"/>
        <end position="188"/>
    </location>
</feature>
<feature type="helix" evidence="51">
    <location>
        <begin position="194"/>
        <end position="208"/>
    </location>
</feature>
<feature type="helix" evidence="51">
    <location>
        <begin position="217"/>
        <end position="220"/>
    </location>
</feature>
<feature type="helix" evidence="51">
    <location>
        <begin position="227"/>
        <end position="234"/>
    </location>
</feature>
<feature type="helix" evidence="51">
    <location>
        <begin position="236"/>
        <end position="239"/>
    </location>
</feature>
<feature type="helix" evidence="52">
    <location>
        <begin position="254"/>
        <end position="256"/>
    </location>
</feature>
<feature type="strand" evidence="52">
    <location>
        <begin position="258"/>
        <end position="261"/>
    </location>
</feature>
<feature type="helix" evidence="52">
    <location>
        <begin position="262"/>
        <end position="264"/>
    </location>
</feature>
<feature type="strand" evidence="52">
    <location>
        <begin position="265"/>
        <end position="267"/>
    </location>
</feature>
<feature type="strand" evidence="52">
    <location>
        <begin position="275"/>
        <end position="280"/>
    </location>
</feature>
<feature type="turn" evidence="52">
    <location>
        <begin position="282"/>
        <end position="284"/>
    </location>
</feature>
<feature type="strand" evidence="52">
    <location>
        <begin position="289"/>
        <end position="294"/>
    </location>
</feature>
<feature type="strand" evidence="52">
    <location>
        <begin position="300"/>
        <end position="302"/>
    </location>
</feature>
<feature type="strand" evidence="52">
    <location>
        <begin position="304"/>
        <end position="309"/>
    </location>
</feature>
<feature type="strand" evidence="52">
    <location>
        <begin position="313"/>
        <end position="319"/>
    </location>
</feature>
<feature type="strand" evidence="52">
    <location>
        <begin position="323"/>
        <end position="333"/>
    </location>
</feature>
<feature type="strand" evidence="52">
    <location>
        <begin position="342"/>
        <end position="347"/>
    </location>
</feature>
<feature type="helix" evidence="37">
    <location>
        <begin position="1040"/>
        <end position="1042"/>
    </location>
</feature>
<feature type="strand" evidence="37">
    <location>
        <begin position="1044"/>
        <end position="1047"/>
    </location>
</feature>
<feature type="helix" evidence="37">
    <location>
        <begin position="1048"/>
        <end position="1051"/>
    </location>
</feature>
<feature type="strand" evidence="37">
    <location>
        <begin position="1052"/>
        <end position="1054"/>
    </location>
</feature>
<feature type="strand" evidence="37">
    <location>
        <begin position="1059"/>
        <end position="1064"/>
    </location>
</feature>
<feature type="turn" evidence="37">
    <location>
        <begin position="1066"/>
        <end position="1068"/>
    </location>
</feature>
<feature type="strand" evidence="37">
    <location>
        <begin position="1073"/>
        <end position="1077"/>
    </location>
</feature>
<feature type="strand" evidence="37">
    <location>
        <begin position="1079"/>
        <end position="1081"/>
    </location>
</feature>
<feature type="strand" evidence="37">
    <location>
        <begin position="1084"/>
        <end position="1089"/>
    </location>
</feature>
<feature type="strand" evidence="37">
    <location>
        <begin position="1091"/>
        <end position="1100"/>
    </location>
</feature>
<feature type="strand" evidence="37">
    <location>
        <begin position="1102"/>
        <end position="1115"/>
    </location>
</feature>
<feature type="strand" evidence="37">
    <location>
        <begin position="1122"/>
        <end position="1128"/>
    </location>
</feature>
<feature type="helix" evidence="38">
    <location>
        <begin position="1133"/>
        <end position="1135"/>
    </location>
</feature>
<feature type="strand" evidence="38">
    <location>
        <begin position="1136"/>
        <end position="1140"/>
    </location>
</feature>
<feature type="helix" evidence="38">
    <location>
        <begin position="1141"/>
        <end position="1143"/>
    </location>
</feature>
<feature type="strand" evidence="38">
    <location>
        <begin position="1154"/>
        <end position="1160"/>
    </location>
</feature>
<feature type="strand" evidence="38">
    <location>
        <begin position="1166"/>
        <end position="1172"/>
    </location>
</feature>
<feature type="turn" evidence="38">
    <location>
        <begin position="1173"/>
        <end position="1175"/>
    </location>
</feature>
<feature type="strand" evidence="38">
    <location>
        <begin position="1179"/>
        <end position="1184"/>
    </location>
</feature>
<feature type="strand" evidence="38">
    <location>
        <begin position="1188"/>
        <end position="1195"/>
    </location>
</feature>
<feature type="strand" evidence="38">
    <location>
        <begin position="1200"/>
        <end position="1208"/>
    </location>
</feature>
<feature type="strand" evidence="38">
    <location>
        <begin position="1217"/>
        <end position="1223"/>
    </location>
</feature>
<feature type="strand" evidence="39">
    <location>
        <begin position="1232"/>
        <end position="1235"/>
    </location>
</feature>
<feature type="helix" evidence="39">
    <location>
        <begin position="1236"/>
        <end position="1239"/>
    </location>
</feature>
<feature type="strand" evidence="39">
    <location>
        <begin position="1249"/>
        <end position="1254"/>
    </location>
</feature>
<feature type="strand" evidence="39">
    <location>
        <begin position="1256"/>
        <end position="1258"/>
    </location>
</feature>
<feature type="strand" evidence="39">
    <location>
        <begin position="1273"/>
        <end position="1275"/>
    </location>
</feature>
<feature type="strand" evidence="39">
    <location>
        <begin position="1281"/>
        <end position="1284"/>
    </location>
</feature>
<feature type="strand" evidence="39">
    <location>
        <begin position="1286"/>
        <end position="1294"/>
    </location>
</feature>
<feature type="strand" evidence="39">
    <location>
        <begin position="1300"/>
        <end position="1310"/>
    </location>
</feature>
<feature type="strand" evidence="39">
    <location>
        <begin position="1317"/>
        <end position="1321"/>
    </location>
</feature>
<feature type="strand" evidence="40">
    <location>
        <begin position="1332"/>
        <end position="1335"/>
    </location>
</feature>
<feature type="helix" evidence="40">
    <location>
        <begin position="1336"/>
        <end position="1339"/>
    </location>
</feature>
<feature type="strand" evidence="40">
    <location>
        <begin position="1347"/>
        <end position="1352"/>
    </location>
</feature>
<feature type="turn" evidence="40">
    <location>
        <begin position="1354"/>
        <end position="1356"/>
    </location>
</feature>
<feature type="strand" evidence="40">
    <location>
        <begin position="1361"/>
        <end position="1369"/>
    </location>
</feature>
<feature type="strand" evidence="40">
    <location>
        <begin position="1374"/>
        <end position="1377"/>
    </location>
</feature>
<feature type="strand" evidence="40">
    <location>
        <begin position="1379"/>
        <end position="1381"/>
    </location>
</feature>
<feature type="strand" evidence="40">
    <location>
        <begin position="1383"/>
        <end position="1387"/>
    </location>
</feature>
<feature type="strand" evidence="40">
    <location>
        <begin position="1393"/>
        <end position="1401"/>
    </location>
</feature>
<feature type="strand" evidence="40">
    <location>
        <begin position="1410"/>
        <end position="1416"/>
    </location>
</feature>
<feature type="strand" evidence="41">
    <location>
        <begin position="1425"/>
        <end position="1428"/>
    </location>
</feature>
<feature type="turn" evidence="41">
    <location>
        <begin position="1429"/>
        <end position="1431"/>
    </location>
</feature>
<feature type="strand" evidence="41">
    <location>
        <begin position="1441"/>
        <end position="1446"/>
    </location>
</feature>
<feature type="turn" evidence="41">
    <location>
        <begin position="1448"/>
        <end position="1450"/>
    </location>
</feature>
<feature type="strand" evidence="41">
    <location>
        <begin position="1455"/>
        <end position="1460"/>
    </location>
</feature>
<feature type="strand" evidence="41">
    <location>
        <begin position="1462"/>
        <end position="1464"/>
    </location>
</feature>
<feature type="strand" evidence="41">
    <location>
        <begin position="1475"/>
        <end position="1483"/>
    </location>
</feature>
<feature type="strand" evidence="41">
    <location>
        <begin position="1489"/>
        <end position="1501"/>
    </location>
</feature>
<feature type="strand" evidence="41">
    <location>
        <begin position="1506"/>
        <end position="1512"/>
    </location>
</feature>
<feature type="helix" evidence="45">
    <location>
        <begin position="1517"/>
        <end position="1519"/>
    </location>
</feature>
<feature type="strand" evidence="45">
    <location>
        <begin position="1520"/>
        <end position="1524"/>
    </location>
</feature>
<feature type="helix" evidence="45">
    <location>
        <begin position="1525"/>
        <end position="1527"/>
    </location>
</feature>
<feature type="strand" evidence="45">
    <location>
        <begin position="1538"/>
        <end position="1546"/>
    </location>
</feature>
<feature type="strand" evidence="45">
    <location>
        <begin position="1566"/>
        <end position="1570"/>
    </location>
</feature>
<feature type="strand" evidence="45">
    <location>
        <begin position="1573"/>
        <end position="1580"/>
    </location>
</feature>
<feature type="strand" evidence="45">
    <location>
        <begin position="1586"/>
        <end position="1590"/>
    </location>
</feature>
<feature type="strand" evidence="45">
    <location>
        <begin position="1593"/>
        <end position="1596"/>
    </location>
</feature>
<feature type="strand" evidence="45">
    <location>
        <begin position="1603"/>
        <end position="1609"/>
    </location>
</feature>
<feature type="strand" evidence="43">
    <location>
        <begin position="1618"/>
        <end position="1621"/>
    </location>
</feature>
<feature type="helix" evidence="43">
    <location>
        <begin position="1622"/>
        <end position="1624"/>
    </location>
</feature>
<feature type="strand" evidence="43">
    <location>
        <begin position="1625"/>
        <end position="1639"/>
    </location>
</feature>
<feature type="strand" evidence="43">
    <location>
        <begin position="1641"/>
        <end position="1643"/>
    </location>
</feature>
<feature type="strand" evidence="43">
    <location>
        <begin position="1648"/>
        <end position="1653"/>
    </location>
</feature>
<feature type="strand" evidence="43">
    <location>
        <begin position="1663"/>
        <end position="1666"/>
    </location>
</feature>
<feature type="strand" evidence="43">
    <location>
        <begin position="1672"/>
        <end position="1677"/>
    </location>
</feature>
<feature type="strand" evidence="43">
    <location>
        <begin position="1682"/>
        <end position="1692"/>
    </location>
</feature>
<feature type="strand" evidence="43">
    <location>
        <begin position="1699"/>
        <end position="1705"/>
    </location>
</feature>
<feature type="strand" evidence="53">
    <location>
        <begin position="1747"/>
        <end position="1751"/>
    </location>
</feature>
<feature type="strand" evidence="53">
    <location>
        <begin position="1760"/>
        <end position="1765"/>
    </location>
</feature>
<feature type="strand" evidence="53">
    <location>
        <begin position="1775"/>
        <end position="1779"/>
    </location>
</feature>
<feature type="turn" evidence="53">
    <location>
        <begin position="1780"/>
        <end position="1782"/>
    </location>
</feature>
<feature type="strand" evidence="53">
    <location>
        <begin position="1783"/>
        <end position="1788"/>
    </location>
</feature>
<feature type="strand" evidence="53">
    <location>
        <begin position="1794"/>
        <end position="1802"/>
    </location>
</feature>
<feature type="strand" evidence="53">
    <location>
        <begin position="1811"/>
        <end position="1816"/>
    </location>
</feature>
<feature type="strand" evidence="53">
    <location>
        <begin position="1825"/>
        <end position="1828"/>
    </location>
</feature>
<feature type="helix" evidence="53">
    <location>
        <begin position="1829"/>
        <end position="1831"/>
    </location>
</feature>
<feature type="strand" evidence="53">
    <location>
        <begin position="1833"/>
        <end position="1835"/>
    </location>
</feature>
<feature type="strand" evidence="53">
    <location>
        <begin position="1840"/>
        <end position="1845"/>
    </location>
</feature>
<feature type="strand" evidence="53">
    <location>
        <begin position="1855"/>
        <end position="1863"/>
    </location>
</feature>
<feature type="strand" evidence="53">
    <location>
        <begin position="1868"/>
        <end position="1870"/>
    </location>
</feature>
<feature type="strand" evidence="53">
    <location>
        <begin position="1872"/>
        <end position="1880"/>
    </location>
</feature>
<feature type="strand" evidence="53">
    <location>
        <begin position="1886"/>
        <end position="1898"/>
    </location>
</feature>
<feature type="strand" evidence="53">
    <location>
        <begin position="1903"/>
        <end position="1909"/>
    </location>
</feature>
<feature type="strand" evidence="44">
    <location>
        <begin position="1924"/>
        <end position="1927"/>
    </location>
</feature>
<feature type="strand" evidence="44">
    <location>
        <begin position="1941"/>
        <end position="1943"/>
    </location>
</feature>
<feature type="strand" evidence="44">
    <location>
        <begin position="1952"/>
        <end position="1957"/>
    </location>
</feature>
<feature type="turn" evidence="44">
    <location>
        <begin position="1958"/>
        <end position="1960"/>
    </location>
</feature>
<feature type="strand" evidence="44">
    <location>
        <begin position="1961"/>
        <end position="1966"/>
    </location>
</feature>
<feature type="strand" evidence="44">
    <location>
        <begin position="1972"/>
        <end position="1977"/>
    </location>
</feature>
<feature type="strand" evidence="44">
    <location>
        <begin position="1979"/>
        <end position="1984"/>
    </location>
</feature>
<feature type="strand" evidence="44">
    <location>
        <begin position="1989"/>
        <end position="1994"/>
    </location>
</feature>
<feature type="strand" evidence="44">
    <location>
        <begin position="1997"/>
        <end position="1999"/>
    </location>
</feature>
<feature type="helix" evidence="36">
    <location>
        <begin position="2002"/>
        <end position="2004"/>
    </location>
</feature>
<feature type="strand" evidence="36">
    <location>
        <begin position="2006"/>
        <end position="2010"/>
    </location>
</feature>
<feature type="turn" evidence="36">
    <location>
        <begin position="2011"/>
        <end position="2013"/>
    </location>
</feature>
<feature type="strand" evidence="36">
    <location>
        <begin position="2014"/>
        <end position="2016"/>
    </location>
</feature>
<feature type="strand" evidence="36">
    <location>
        <begin position="2021"/>
        <end position="2026"/>
    </location>
</feature>
<feature type="turn" evidence="36">
    <location>
        <begin position="2028"/>
        <end position="2030"/>
    </location>
</feature>
<feature type="strand" evidence="36">
    <location>
        <begin position="2035"/>
        <end position="2043"/>
    </location>
</feature>
<feature type="strand" evidence="36">
    <location>
        <begin position="2057"/>
        <end position="2061"/>
    </location>
</feature>
<feature type="strand" evidence="36">
    <location>
        <begin position="2067"/>
        <end position="2077"/>
    </location>
</feature>
<feature type="strand" evidence="36">
    <location>
        <begin position="2084"/>
        <end position="2090"/>
    </location>
</feature>
<feature type="strand" evidence="42">
    <location>
        <begin position="2111"/>
        <end position="2113"/>
    </location>
</feature>
<feature type="strand" evidence="42">
    <location>
        <begin position="2118"/>
        <end position="2120"/>
    </location>
</feature>
<feature type="helix" evidence="42">
    <location>
        <begin position="2126"/>
        <end position="2128"/>
    </location>
</feature>
<feature type="strand" evidence="42">
    <location>
        <begin position="2130"/>
        <end position="2134"/>
    </location>
</feature>
<feature type="strand" evidence="42">
    <location>
        <begin position="2140"/>
        <end position="2142"/>
    </location>
</feature>
<feature type="strand" evidence="42">
    <location>
        <begin position="2144"/>
        <end position="2147"/>
    </location>
</feature>
<feature type="strand" evidence="42">
    <location>
        <begin position="2149"/>
        <end position="2157"/>
    </location>
</feature>
<feature type="strand" evidence="42">
    <location>
        <begin position="2164"/>
        <end position="2175"/>
    </location>
</feature>
<feature type="strand" evidence="42">
    <location>
        <begin position="2180"/>
        <end position="2185"/>
    </location>
</feature>
<feature type="helix" evidence="46">
    <location>
        <begin position="2193"/>
        <end position="2195"/>
    </location>
</feature>
<feature type="turn" evidence="46">
    <location>
        <begin position="2201"/>
        <end position="2203"/>
    </location>
</feature>
<feature type="strand" evidence="46">
    <location>
        <begin position="2206"/>
        <end position="2208"/>
    </location>
</feature>
<feature type="strand" evidence="46">
    <location>
        <begin position="2210"/>
        <end position="2214"/>
    </location>
</feature>
<feature type="strand" evidence="46">
    <location>
        <begin position="2219"/>
        <end position="2221"/>
    </location>
</feature>
<feature type="strand" evidence="46">
    <location>
        <begin position="2226"/>
        <end position="2234"/>
    </location>
</feature>
<feature type="strand" evidence="46">
    <location>
        <begin position="2236"/>
        <end position="2240"/>
    </location>
</feature>
<feature type="strand" evidence="46">
    <location>
        <begin position="2250"/>
        <end position="2256"/>
    </location>
</feature>
<feature type="strand" evidence="46">
    <location>
        <begin position="2258"/>
        <end position="2266"/>
    </location>
</feature>
<feature type="strand" evidence="46">
    <location>
        <begin position="2275"/>
        <end position="2281"/>
    </location>
</feature>
<feature type="strand" evidence="47">
    <location>
        <begin position="2288"/>
        <end position="2294"/>
    </location>
</feature>
<feature type="strand" evidence="47">
    <location>
        <begin position="2306"/>
        <end position="2314"/>
    </location>
</feature>
<feature type="strand" evidence="47">
    <location>
        <begin position="2320"/>
        <end position="2324"/>
    </location>
</feature>
<feature type="strand" evidence="47">
    <location>
        <begin position="2330"/>
        <end position="2332"/>
    </location>
</feature>
<feature type="strand" evidence="47">
    <location>
        <begin position="2334"/>
        <end position="2337"/>
    </location>
</feature>
<feature type="strand" evidence="47">
    <location>
        <begin position="2340"/>
        <end position="2347"/>
    </location>
</feature>
<feature type="strand" evidence="47">
    <location>
        <begin position="2352"/>
        <end position="2365"/>
    </location>
</feature>
<feature type="strand" evidence="47">
    <location>
        <begin position="2370"/>
        <end position="2375"/>
    </location>
</feature>
<feature type="turn" evidence="48">
    <location>
        <begin position="2384"/>
        <end position="2386"/>
    </location>
</feature>
<feature type="strand" evidence="48">
    <location>
        <begin position="2388"/>
        <end position="2392"/>
    </location>
</feature>
<feature type="turn" evidence="48">
    <location>
        <begin position="2393"/>
        <end position="2395"/>
    </location>
</feature>
<feature type="strand" evidence="48">
    <location>
        <begin position="2403"/>
        <end position="2408"/>
    </location>
</feature>
<feature type="turn" evidence="48">
    <location>
        <begin position="2410"/>
        <end position="2412"/>
    </location>
</feature>
<feature type="strand" evidence="48">
    <location>
        <begin position="2417"/>
        <end position="2425"/>
    </location>
</feature>
<feature type="strand" evidence="48">
    <location>
        <begin position="2430"/>
        <end position="2433"/>
    </location>
</feature>
<feature type="strand" evidence="48">
    <location>
        <begin position="2435"/>
        <end position="2442"/>
    </location>
</feature>
<feature type="strand" evidence="48">
    <location>
        <begin position="2448"/>
        <end position="2459"/>
    </location>
</feature>
<feature type="strand" evidence="48">
    <location>
        <begin position="2466"/>
        <end position="2473"/>
    </location>
</feature>
<feature type="turn" evidence="49">
    <location>
        <begin position="2512"/>
        <end position="2514"/>
    </location>
</feature>
<feature type="strand" evidence="49">
    <location>
        <begin position="2516"/>
        <end position="2519"/>
    </location>
</feature>
<feature type="helix" evidence="49">
    <location>
        <begin position="2520"/>
        <end position="2523"/>
    </location>
</feature>
<feature type="strand" evidence="49">
    <location>
        <begin position="2531"/>
        <end position="2536"/>
    </location>
</feature>
<feature type="turn" evidence="49">
    <location>
        <begin position="2538"/>
        <end position="2540"/>
    </location>
</feature>
<feature type="strand" evidence="49">
    <location>
        <begin position="2545"/>
        <end position="2547"/>
    </location>
</feature>
<feature type="strand" evidence="49">
    <location>
        <begin position="2557"/>
        <end position="2565"/>
    </location>
</feature>
<feature type="strand" evidence="49">
    <location>
        <begin position="2568"/>
        <end position="2574"/>
    </location>
</feature>
<feature type="strand" evidence="49">
    <location>
        <begin position="2579"/>
        <end position="2583"/>
    </location>
</feature>
<feature type="strand" evidence="49">
    <location>
        <begin position="2585"/>
        <end position="2591"/>
    </location>
</feature>
<feature type="strand" evidence="49">
    <location>
        <begin position="2596"/>
        <end position="2601"/>
    </location>
</feature>
<feature type="modified residue" description="Phosphoserine" evidence="35">
    <location sequence="O75369-8">
        <position position="1474"/>
    </location>
</feature>
<dbReference type="EMBL" id="AF042166">
    <property type="protein sequence ID" value="AAC39842.1"/>
    <property type="molecule type" value="mRNA"/>
</dbReference>
<dbReference type="EMBL" id="AF043045">
    <property type="protein sequence ID" value="AAC33845.1"/>
    <property type="molecule type" value="mRNA"/>
</dbReference>
<dbReference type="EMBL" id="AF353666">
    <property type="protein sequence ID" value="AAL68439.1"/>
    <property type="molecule type" value="mRNA"/>
</dbReference>
<dbReference type="EMBL" id="AF353667">
    <property type="protein sequence ID" value="AAL68440.1"/>
    <property type="molecule type" value="Genomic_DNA"/>
</dbReference>
<dbReference type="EMBL" id="AF353667">
    <property type="protein sequence ID" value="AAL68441.1"/>
    <property type="molecule type" value="Genomic_DNA"/>
</dbReference>
<dbReference type="EMBL" id="AF353667">
    <property type="protein sequence ID" value="AAL68442.1"/>
    <property type="molecule type" value="Genomic_DNA"/>
</dbReference>
<dbReference type="EMBL" id="AF353667">
    <property type="protein sequence ID" value="AAL68443.1"/>
    <property type="molecule type" value="Genomic_DNA"/>
</dbReference>
<dbReference type="EMBL" id="AF191633">
    <property type="protein sequence ID" value="AAF72339.1"/>
    <property type="molecule type" value="Genomic_DNA"/>
</dbReference>
<dbReference type="EMBL" id="AF191594">
    <property type="protein sequence ID" value="AAF72339.1"/>
    <property type="status" value="JOINED"/>
    <property type="molecule type" value="Genomic_DNA"/>
</dbReference>
<dbReference type="EMBL" id="AF191595">
    <property type="protein sequence ID" value="AAF72339.1"/>
    <property type="status" value="JOINED"/>
    <property type="molecule type" value="Genomic_DNA"/>
</dbReference>
<dbReference type="EMBL" id="AF191596">
    <property type="protein sequence ID" value="AAF72339.1"/>
    <property type="status" value="JOINED"/>
    <property type="molecule type" value="Genomic_DNA"/>
</dbReference>
<dbReference type="EMBL" id="AF191597">
    <property type="protein sequence ID" value="AAF72339.1"/>
    <property type="status" value="JOINED"/>
    <property type="molecule type" value="Genomic_DNA"/>
</dbReference>
<dbReference type="EMBL" id="AF191598">
    <property type="protein sequence ID" value="AAF72339.1"/>
    <property type="status" value="JOINED"/>
    <property type="molecule type" value="Genomic_DNA"/>
</dbReference>
<dbReference type="EMBL" id="AF191599">
    <property type="protein sequence ID" value="AAF72339.1"/>
    <property type="status" value="JOINED"/>
    <property type="molecule type" value="Genomic_DNA"/>
</dbReference>
<dbReference type="EMBL" id="AF191600">
    <property type="protein sequence ID" value="AAF72339.1"/>
    <property type="status" value="JOINED"/>
    <property type="molecule type" value="Genomic_DNA"/>
</dbReference>
<dbReference type="EMBL" id="AF191601">
    <property type="protein sequence ID" value="AAF72339.1"/>
    <property type="status" value="JOINED"/>
    <property type="molecule type" value="Genomic_DNA"/>
</dbReference>
<dbReference type="EMBL" id="AF191602">
    <property type="protein sequence ID" value="AAF72339.1"/>
    <property type="status" value="JOINED"/>
    <property type="molecule type" value="Genomic_DNA"/>
</dbReference>
<dbReference type="EMBL" id="AF191603">
    <property type="protein sequence ID" value="AAF72339.1"/>
    <property type="status" value="JOINED"/>
    <property type="molecule type" value="Genomic_DNA"/>
</dbReference>
<dbReference type="EMBL" id="AF191604">
    <property type="protein sequence ID" value="AAF72339.1"/>
    <property type="status" value="JOINED"/>
    <property type="molecule type" value="Genomic_DNA"/>
</dbReference>
<dbReference type="EMBL" id="AF191605">
    <property type="protein sequence ID" value="AAF72339.1"/>
    <property type="status" value="JOINED"/>
    <property type="molecule type" value="Genomic_DNA"/>
</dbReference>
<dbReference type="EMBL" id="AF191606">
    <property type="protein sequence ID" value="AAF72339.1"/>
    <property type="status" value="JOINED"/>
    <property type="molecule type" value="Genomic_DNA"/>
</dbReference>
<dbReference type="EMBL" id="AF191607">
    <property type="protein sequence ID" value="AAF72339.1"/>
    <property type="status" value="JOINED"/>
    <property type="molecule type" value="Genomic_DNA"/>
</dbReference>
<dbReference type="EMBL" id="AF191608">
    <property type="protein sequence ID" value="AAF72339.1"/>
    <property type="status" value="JOINED"/>
    <property type="molecule type" value="Genomic_DNA"/>
</dbReference>
<dbReference type="EMBL" id="AF191609">
    <property type="protein sequence ID" value="AAF72339.1"/>
    <property type="status" value="JOINED"/>
    <property type="molecule type" value="Genomic_DNA"/>
</dbReference>
<dbReference type="EMBL" id="AF191611">
    <property type="protein sequence ID" value="AAF72339.1"/>
    <property type="status" value="JOINED"/>
    <property type="molecule type" value="Genomic_DNA"/>
</dbReference>
<dbReference type="EMBL" id="AF191610">
    <property type="protein sequence ID" value="AAF72339.1"/>
    <property type="status" value="JOINED"/>
    <property type="molecule type" value="Genomic_DNA"/>
</dbReference>
<dbReference type="EMBL" id="AF191613">
    <property type="protein sequence ID" value="AAF72339.1"/>
    <property type="status" value="JOINED"/>
    <property type="molecule type" value="Genomic_DNA"/>
</dbReference>
<dbReference type="EMBL" id="AF191612">
    <property type="protein sequence ID" value="AAF72339.1"/>
    <property type="status" value="JOINED"/>
    <property type="molecule type" value="Genomic_DNA"/>
</dbReference>
<dbReference type="EMBL" id="AF191614">
    <property type="protein sequence ID" value="AAF72339.1"/>
    <property type="status" value="JOINED"/>
    <property type="molecule type" value="Genomic_DNA"/>
</dbReference>
<dbReference type="EMBL" id="AF191615">
    <property type="protein sequence ID" value="AAF72339.1"/>
    <property type="status" value="JOINED"/>
    <property type="molecule type" value="Genomic_DNA"/>
</dbReference>
<dbReference type="EMBL" id="AF191617">
    <property type="protein sequence ID" value="AAF72339.1"/>
    <property type="status" value="JOINED"/>
    <property type="molecule type" value="Genomic_DNA"/>
</dbReference>
<dbReference type="EMBL" id="AF191616">
    <property type="protein sequence ID" value="AAF72339.1"/>
    <property type="status" value="JOINED"/>
    <property type="molecule type" value="Genomic_DNA"/>
</dbReference>
<dbReference type="EMBL" id="AF191618">
    <property type="protein sequence ID" value="AAF72339.1"/>
    <property type="status" value="JOINED"/>
    <property type="molecule type" value="Genomic_DNA"/>
</dbReference>
<dbReference type="EMBL" id="AF191619">
    <property type="protein sequence ID" value="AAF72339.1"/>
    <property type="status" value="JOINED"/>
    <property type="molecule type" value="Genomic_DNA"/>
</dbReference>
<dbReference type="EMBL" id="AF191620">
    <property type="protein sequence ID" value="AAF72339.1"/>
    <property type="status" value="JOINED"/>
    <property type="molecule type" value="Genomic_DNA"/>
</dbReference>
<dbReference type="EMBL" id="AF191621">
    <property type="protein sequence ID" value="AAF72339.1"/>
    <property type="status" value="JOINED"/>
    <property type="molecule type" value="Genomic_DNA"/>
</dbReference>
<dbReference type="EMBL" id="AF191622">
    <property type="protein sequence ID" value="AAF72339.1"/>
    <property type="status" value="JOINED"/>
    <property type="molecule type" value="Genomic_DNA"/>
</dbReference>
<dbReference type="EMBL" id="AF191623">
    <property type="protein sequence ID" value="AAF72339.1"/>
    <property type="status" value="JOINED"/>
    <property type="molecule type" value="Genomic_DNA"/>
</dbReference>
<dbReference type="EMBL" id="AF191624">
    <property type="protein sequence ID" value="AAF72339.1"/>
    <property type="status" value="JOINED"/>
    <property type="molecule type" value="Genomic_DNA"/>
</dbReference>
<dbReference type="EMBL" id="AF191625">
    <property type="protein sequence ID" value="AAF72339.1"/>
    <property type="status" value="JOINED"/>
    <property type="molecule type" value="Genomic_DNA"/>
</dbReference>
<dbReference type="EMBL" id="AF191627">
    <property type="protein sequence ID" value="AAF72339.1"/>
    <property type="status" value="JOINED"/>
    <property type="molecule type" value="Genomic_DNA"/>
</dbReference>
<dbReference type="EMBL" id="AF191626">
    <property type="protein sequence ID" value="AAF72339.1"/>
    <property type="status" value="JOINED"/>
    <property type="molecule type" value="Genomic_DNA"/>
</dbReference>
<dbReference type="EMBL" id="AF191628">
    <property type="protein sequence ID" value="AAF72339.1"/>
    <property type="status" value="JOINED"/>
    <property type="molecule type" value="Genomic_DNA"/>
</dbReference>
<dbReference type="EMBL" id="AF191629">
    <property type="protein sequence ID" value="AAF72339.1"/>
    <property type="status" value="JOINED"/>
    <property type="molecule type" value="Genomic_DNA"/>
</dbReference>
<dbReference type="EMBL" id="AF191630">
    <property type="protein sequence ID" value="AAF72339.1"/>
    <property type="status" value="JOINED"/>
    <property type="molecule type" value="Genomic_DNA"/>
</dbReference>
<dbReference type="EMBL" id="AF191631">
    <property type="protein sequence ID" value="AAF72339.1"/>
    <property type="status" value="JOINED"/>
    <property type="molecule type" value="Genomic_DNA"/>
</dbReference>
<dbReference type="EMBL" id="AF191632">
    <property type="protein sequence ID" value="AAF72339.1"/>
    <property type="status" value="JOINED"/>
    <property type="molecule type" value="Genomic_DNA"/>
</dbReference>
<dbReference type="EMBL" id="AF238609">
    <property type="protein sequence ID" value="AAF97046.1"/>
    <property type="molecule type" value="mRNA"/>
</dbReference>
<dbReference type="EMBL" id="AB371580">
    <property type="protein sequence ID" value="BAG48309.1"/>
    <property type="molecule type" value="mRNA"/>
</dbReference>
<dbReference type="EMBL" id="AB371581">
    <property type="protein sequence ID" value="BAG48310.1"/>
    <property type="molecule type" value="mRNA"/>
</dbReference>
<dbReference type="EMBL" id="AB371582">
    <property type="protein sequence ID" value="BAG48311.1"/>
    <property type="molecule type" value="mRNA"/>
</dbReference>
<dbReference type="EMBL" id="AB191258">
    <property type="protein sequence ID" value="BAD52434.1"/>
    <property type="molecule type" value="mRNA"/>
</dbReference>
<dbReference type="EMBL" id="BX641085">
    <property type="protein sequence ID" value="CAE46040.1"/>
    <property type="molecule type" value="mRNA"/>
</dbReference>
<dbReference type="EMBL" id="AC114399">
    <property type="status" value="NOT_ANNOTATED_CDS"/>
    <property type="molecule type" value="Genomic_DNA"/>
</dbReference>
<dbReference type="EMBL" id="AC137936">
    <property type="status" value="NOT_ANNOTATED_CDS"/>
    <property type="molecule type" value="Genomic_DNA"/>
</dbReference>
<dbReference type="EMBL" id="AL137574">
    <property type="protein sequence ID" value="CAB70818.1"/>
    <property type="molecule type" value="mRNA"/>
</dbReference>
<dbReference type="EMBL" id="AB209889">
    <property type="protein sequence ID" value="BAD93126.1"/>
    <property type="molecule type" value="mRNA"/>
</dbReference>
<dbReference type="EMBL" id="M62994">
    <property type="protein sequence ID" value="AAA35505.1"/>
    <property type="status" value="ALT_FRAME"/>
    <property type="molecule type" value="mRNA"/>
</dbReference>
<dbReference type="CCDS" id="CCDS2885.1">
    <molecule id="O75369-1"/>
</dbReference>
<dbReference type="CCDS" id="CCDS54599.1">
    <molecule id="O75369-8"/>
</dbReference>
<dbReference type="CCDS" id="CCDS54600.1">
    <molecule id="O75369-9"/>
</dbReference>
<dbReference type="CCDS" id="CCDS54601.1">
    <molecule id="O75369-2"/>
</dbReference>
<dbReference type="PIR" id="T46270">
    <property type="entry name" value="T46270"/>
</dbReference>
<dbReference type="RefSeq" id="NP_001157789.1">
    <molecule id="O75369-8"/>
    <property type="nucleotide sequence ID" value="NM_001164317.2"/>
</dbReference>
<dbReference type="RefSeq" id="NP_001157790.1">
    <molecule id="O75369-9"/>
    <property type="nucleotide sequence ID" value="NM_001164318.2"/>
</dbReference>
<dbReference type="RefSeq" id="NP_001157791.1">
    <molecule id="O75369-2"/>
    <property type="nucleotide sequence ID" value="NM_001164319.2"/>
</dbReference>
<dbReference type="RefSeq" id="NP_001448.2">
    <molecule id="O75369-1"/>
    <property type="nucleotide sequence ID" value="NM_001457.4"/>
</dbReference>
<dbReference type="PDB" id="2DI8">
    <property type="method" value="NMR"/>
    <property type="chains" value="A=1999-2096"/>
</dbReference>
<dbReference type="PDB" id="2DI9">
    <property type="method" value="NMR"/>
    <property type="chains" value="A=1017-1134"/>
</dbReference>
<dbReference type="PDB" id="2DIA">
    <property type="method" value="NMR"/>
    <property type="chains" value="A=1130-1229"/>
</dbReference>
<dbReference type="PDB" id="2DIB">
    <property type="method" value="NMR"/>
    <property type="chains" value="A=1215-1329"/>
</dbReference>
<dbReference type="PDB" id="2DIC">
    <property type="method" value="NMR"/>
    <property type="chains" value="A=1325-1422"/>
</dbReference>
<dbReference type="PDB" id="2DJ4">
    <property type="method" value="NMR"/>
    <property type="chains" value="A=1418-1518"/>
</dbReference>
<dbReference type="PDB" id="2DLG">
    <property type="method" value="NMR"/>
    <property type="chains" value="A=2104-2192"/>
</dbReference>
<dbReference type="PDB" id="2DMB">
    <property type="method" value="NMR"/>
    <property type="chains" value="A=1611-1721"/>
</dbReference>
<dbReference type="PDB" id="2DMC">
    <property type="method" value="NMR"/>
    <property type="chains" value="A=1899-2001"/>
</dbReference>
<dbReference type="PDB" id="2E9I">
    <property type="method" value="NMR"/>
    <property type="chains" value="A=2094-2192"/>
</dbReference>
<dbReference type="PDB" id="2E9J">
    <property type="method" value="NMR"/>
    <property type="chains" value="A=1504-1615"/>
</dbReference>
<dbReference type="PDB" id="2EE6">
    <property type="method" value="NMR"/>
    <property type="chains" value="A=2190-2287"/>
</dbReference>
<dbReference type="PDB" id="2EE9">
    <property type="method" value="NMR"/>
    <property type="chains" value="A=1736-1823"/>
</dbReference>
<dbReference type="PDB" id="2EEA">
    <property type="method" value="NMR"/>
    <property type="chains" value="A=1808-1915"/>
</dbReference>
<dbReference type="PDB" id="2EEB">
    <property type="method" value="NMR"/>
    <property type="chains" value="A=2284-2382"/>
</dbReference>
<dbReference type="PDB" id="2EEC">
    <property type="method" value="NMR"/>
    <property type="chains" value="A=2371-2488"/>
</dbReference>
<dbReference type="PDB" id="2EED">
    <property type="method" value="NMR"/>
    <property type="chains" value="A=2509-2602"/>
</dbReference>
<dbReference type="PDB" id="2WA5">
    <property type="method" value="X-ray"/>
    <property type="resolution" value="1.90 A"/>
    <property type="chains" value="A=2-242"/>
</dbReference>
<dbReference type="PDB" id="2WA6">
    <property type="method" value="X-ray"/>
    <property type="resolution" value="1.95 A"/>
    <property type="chains" value="A=2-242"/>
</dbReference>
<dbReference type="PDB" id="2WA7">
    <property type="method" value="X-ray"/>
    <property type="resolution" value="1.85 A"/>
    <property type="chains" value="A=2-242"/>
</dbReference>
<dbReference type="PDB" id="3FER">
    <property type="method" value="X-ray"/>
    <property type="resolution" value="2.40 A"/>
    <property type="chains" value="A/B/C/D=1-252"/>
</dbReference>
<dbReference type="PDB" id="4B7L">
    <property type="method" value="X-ray"/>
    <property type="resolution" value="2.05 A"/>
    <property type="chains" value="A/B=1-347"/>
</dbReference>
<dbReference type="PDB" id="5DCP">
    <property type="method" value="X-ray"/>
    <property type="resolution" value="2.49 A"/>
    <property type="chains" value="A/B=1737-1911"/>
</dbReference>
<dbReference type="PDBsum" id="2DI8"/>
<dbReference type="PDBsum" id="2DI9"/>
<dbReference type="PDBsum" id="2DIA"/>
<dbReference type="PDBsum" id="2DIB"/>
<dbReference type="PDBsum" id="2DIC"/>
<dbReference type="PDBsum" id="2DJ4"/>
<dbReference type="PDBsum" id="2DLG"/>
<dbReference type="PDBsum" id="2DMB"/>
<dbReference type="PDBsum" id="2DMC"/>
<dbReference type="PDBsum" id="2E9I"/>
<dbReference type="PDBsum" id="2E9J"/>
<dbReference type="PDBsum" id="2EE6"/>
<dbReference type="PDBsum" id="2EE9"/>
<dbReference type="PDBsum" id="2EEA"/>
<dbReference type="PDBsum" id="2EEB"/>
<dbReference type="PDBsum" id="2EEC"/>
<dbReference type="PDBsum" id="2EED"/>
<dbReference type="PDBsum" id="2WA5"/>
<dbReference type="PDBsum" id="2WA6"/>
<dbReference type="PDBsum" id="2WA7"/>
<dbReference type="PDBsum" id="3FER"/>
<dbReference type="PDBsum" id="4B7L"/>
<dbReference type="PDBsum" id="5DCP"/>
<dbReference type="SMR" id="O75369"/>
<dbReference type="BioGRID" id="108606">
    <property type="interactions" value="316"/>
</dbReference>
<dbReference type="FunCoup" id="O75369">
    <property type="interactions" value="1629"/>
</dbReference>
<dbReference type="IntAct" id="O75369">
    <property type="interactions" value="101"/>
</dbReference>
<dbReference type="MINT" id="O75369"/>
<dbReference type="STRING" id="9606.ENSP00000420213"/>
<dbReference type="ChEMBL" id="CHEMBL4295677"/>
<dbReference type="TCDB" id="8.A.66.1.5">
    <property type="family name" value="the dystrophin (dystrophin) family"/>
</dbReference>
<dbReference type="CarbonylDB" id="O75369"/>
<dbReference type="GlyConnect" id="2041">
    <property type="glycosylation" value="2 N-Linked glycans (1 site)"/>
</dbReference>
<dbReference type="GlyCosmos" id="O75369">
    <property type="glycosylation" value="5 sites, 5 glycans"/>
</dbReference>
<dbReference type="GlyGen" id="O75369">
    <property type="glycosylation" value="13 sites, 9 N-linked glycans (4 sites), 1 O-linked glycan (8 sites)"/>
</dbReference>
<dbReference type="iPTMnet" id="O75369"/>
<dbReference type="MetOSite" id="O75369"/>
<dbReference type="PhosphoSitePlus" id="O75369"/>
<dbReference type="SwissPalm" id="O75369"/>
<dbReference type="BioMuta" id="FLNB"/>
<dbReference type="CPTAC" id="CPTAC-511"/>
<dbReference type="jPOST" id="O75369"/>
<dbReference type="MassIVE" id="O75369"/>
<dbReference type="PaxDb" id="9606-ENSP00000420213"/>
<dbReference type="PeptideAtlas" id="O75369"/>
<dbReference type="ProteomicsDB" id="49938">
    <molecule id="O75369-1"/>
</dbReference>
<dbReference type="ProteomicsDB" id="49939">
    <molecule id="O75369-2"/>
</dbReference>
<dbReference type="ProteomicsDB" id="49940">
    <molecule id="O75369-3"/>
</dbReference>
<dbReference type="ProteomicsDB" id="49941">
    <molecule id="O75369-4"/>
</dbReference>
<dbReference type="ProteomicsDB" id="49942">
    <molecule id="O75369-5"/>
</dbReference>
<dbReference type="ProteomicsDB" id="49943">
    <molecule id="O75369-6"/>
</dbReference>
<dbReference type="ProteomicsDB" id="49944">
    <molecule id="O75369-7"/>
</dbReference>
<dbReference type="ProteomicsDB" id="49945">
    <molecule id="O75369-8"/>
</dbReference>
<dbReference type="ProteomicsDB" id="49946">
    <molecule id="O75369-9"/>
</dbReference>
<dbReference type="ProteomicsDB" id="75100"/>
<dbReference type="Pumba" id="O75369"/>
<dbReference type="ABCD" id="O75369">
    <property type="antibodies" value="2 sequenced antibodies"/>
</dbReference>
<dbReference type="Antibodypedia" id="1496">
    <property type="antibodies" value="306 antibodies from 34 providers"/>
</dbReference>
<dbReference type="DNASU" id="2317"/>
<dbReference type="Ensembl" id="ENST00000295956.9">
    <molecule id="O75369-1"/>
    <property type="protein sequence ID" value="ENSP00000295956.5"/>
    <property type="gene ID" value="ENSG00000136068.16"/>
</dbReference>
<dbReference type="Ensembl" id="ENST00000358537.7">
    <molecule id="O75369-2"/>
    <property type="protein sequence ID" value="ENSP00000351339.3"/>
    <property type="gene ID" value="ENSG00000136068.16"/>
</dbReference>
<dbReference type="Ensembl" id="ENST00000429972.6">
    <molecule id="O75369-9"/>
    <property type="protein sequence ID" value="ENSP00000415599.2"/>
    <property type="gene ID" value="ENSG00000136068.16"/>
</dbReference>
<dbReference type="Ensembl" id="ENST00000490882.5">
    <molecule id="O75369-8"/>
    <property type="protein sequence ID" value="ENSP00000420213.1"/>
    <property type="gene ID" value="ENSG00000136068.16"/>
</dbReference>
<dbReference type="GeneID" id="2317"/>
<dbReference type="KEGG" id="hsa:2317"/>
<dbReference type="MANE-Select" id="ENST00000295956.9">
    <property type="protein sequence ID" value="ENSP00000295956.5"/>
    <property type="RefSeq nucleotide sequence ID" value="NM_001457.4"/>
    <property type="RefSeq protein sequence ID" value="NP_001448.2"/>
</dbReference>
<dbReference type="UCSC" id="uc003djj.3">
    <molecule id="O75369-1"/>
    <property type="organism name" value="human"/>
</dbReference>
<dbReference type="AGR" id="HGNC:3755"/>
<dbReference type="CTD" id="2317"/>
<dbReference type="DisGeNET" id="2317"/>
<dbReference type="GeneCards" id="FLNB"/>
<dbReference type="GeneReviews" id="FLNB"/>
<dbReference type="HGNC" id="HGNC:3755">
    <property type="gene designation" value="FLNB"/>
</dbReference>
<dbReference type="HPA" id="ENSG00000136068">
    <property type="expression patterns" value="Low tissue specificity"/>
</dbReference>
<dbReference type="MalaCards" id="FLNB"/>
<dbReference type="MIM" id="108720">
    <property type="type" value="phenotype"/>
</dbReference>
<dbReference type="MIM" id="108721">
    <property type="type" value="phenotype"/>
</dbReference>
<dbReference type="MIM" id="112310">
    <property type="type" value="phenotype"/>
</dbReference>
<dbReference type="MIM" id="150250">
    <property type="type" value="phenotype"/>
</dbReference>
<dbReference type="MIM" id="272460">
    <property type="type" value="phenotype"/>
</dbReference>
<dbReference type="MIM" id="603381">
    <property type="type" value="gene"/>
</dbReference>
<dbReference type="neXtProt" id="NX_O75369"/>
<dbReference type="OpenTargets" id="ENSG00000136068"/>
<dbReference type="Orphanet" id="1190">
    <property type="disease" value="Atelosteogenesis type I"/>
</dbReference>
<dbReference type="Orphanet" id="56305">
    <property type="disease" value="Atelosteogenesis type III"/>
</dbReference>
<dbReference type="Orphanet" id="1263">
    <property type="disease" value="Boomerang dysplasia"/>
</dbReference>
<dbReference type="Orphanet" id="503">
    <property type="disease" value="Larsen syndrome"/>
</dbReference>
<dbReference type="Orphanet" id="3275">
    <property type="disease" value="Spondylocarpotarsal synostosis"/>
</dbReference>
<dbReference type="PharmGKB" id="PA28173"/>
<dbReference type="VEuPathDB" id="HostDB:ENSG00000136068"/>
<dbReference type="eggNOG" id="KOG0518">
    <property type="taxonomic scope" value="Eukaryota"/>
</dbReference>
<dbReference type="GeneTree" id="ENSGT00940000156286"/>
<dbReference type="HOGENOM" id="CLU_000783_0_0_1"/>
<dbReference type="InParanoid" id="O75369"/>
<dbReference type="OMA" id="RAVPCKV"/>
<dbReference type="OrthoDB" id="5334309at2759"/>
<dbReference type="PAN-GO" id="O75369">
    <property type="GO annotations" value="0 GO annotations based on evolutionary models"/>
</dbReference>
<dbReference type="PhylomeDB" id="O75369"/>
<dbReference type="TreeFam" id="TF313685"/>
<dbReference type="PathwayCommons" id="O75369"/>
<dbReference type="Reactome" id="R-HSA-1169408">
    <property type="pathway name" value="ISG15 antiviral mechanism"/>
</dbReference>
<dbReference type="SignaLink" id="O75369"/>
<dbReference type="SIGNOR" id="O75369"/>
<dbReference type="BioGRID-ORCS" id="2317">
    <property type="hits" value="14 hits in 1153 CRISPR screens"/>
</dbReference>
<dbReference type="CD-CODE" id="DEE660B4">
    <property type="entry name" value="Stress granule"/>
</dbReference>
<dbReference type="ChiTaRS" id="FLNB">
    <property type="organism name" value="human"/>
</dbReference>
<dbReference type="EvolutionaryTrace" id="O75369"/>
<dbReference type="GeneWiki" id="FLNB"/>
<dbReference type="GenomeRNAi" id="2317"/>
<dbReference type="Pharos" id="O75369">
    <property type="development level" value="Tbio"/>
</dbReference>
<dbReference type="PRO" id="PR:O75369"/>
<dbReference type="Proteomes" id="UP000005640">
    <property type="component" value="Chromosome 3"/>
</dbReference>
<dbReference type="RNAct" id="O75369">
    <property type="molecule type" value="protein"/>
</dbReference>
<dbReference type="Bgee" id="ENSG00000136068">
    <property type="expression patterns" value="Expressed in mucosa of transverse colon and 201 other cell types or tissues"/>
</dbReference>
<dbReference type="ExpressionAtlas" id="O75369">
    <property type="expression patterns" value="baseline and differential"/>
</dbReference>
<dbReference type="GO" id="GO:0015629">
    <property type="term" value="C:actin cytoskeleton"/>
    <property type="evidence" value="ECO:0000304"/>
    <property type="project" value="ProtInc"/>
</dbReference>
<dbReference type="GO" id="GO:0005903">
    <property type="term" value="C:brush border"/>
    <property type="evidence" value="ECO:0007669"/>
    <property type="project" value="Ensembl"/>
</dbReference>
<dbReference type="GO" id="GO:0005938">
    <property type="term" value="C:cell cortex"/>
    <property type="evidence" value="ECO:0007669"/>
    <property type="project" value="UniProtKB-SubCell"/>
</dbReference>
<dbReference type="GO" id="GO:0005737">
    <property type="term" value="C:cytoplasm"/>
    <property type="evidence" value="ECO:0007005"/>
    <property type="project" value="UniProtKB"/>
</dbReference>
<dbReference type="GO" id="GO:0005829">
    <property type="term" value="C:cytosol"/>
    <property type="evidence" value="ECO:0000314"/>
    <property type="project" value="HPA"/>
</dbReference>
<dbReference type="GO" id="GO:0070062">
    <property type="term" value="C:extracellular exosome"/>
    <property type="evidence" value="ECO:0007005"/>
    <property type="project" value="UniProtKB"/>
</dbReference>
<dbReference type="GO" id="GO:0005925">
    <property type="term" value="C:focal adhesion"/>
    <property type="evidence" value="ECO:0007005"/>
    <property type="project" value="UniProtKB"/>
</dbReference>
<dbReference type="GO" id="GO:0016020">
    <property type="term" value="C:membrane"/>
    <property type="evidence" value="ECO:0000303"/>
    <property type="project" value="UniProtKB"/>
</dbReference>
<dbReference type="GO" id="GO:0043025">
    <property type="term" value="C:neuronal cell body"/>
    <property type="evidence" value="ECO:0007669"/>
    <property type="project" value="Ensembl"/>
</dbReference>
<dbReference type="GO" id="GO:0045335">
    <property type="term" value="C:phagocytic vesicle"/>
    <property type="evidence" value="ECO:0007669"/>
    <property type="project" value="Ensembl"/>
</dbReference>
<dbReference type="GO" id="GO:0005886">
    <property type="term" value="C:plasma membrane"/>
    <property type="evidence" value="ECO:0000314"/>
    <property type="project" value="HPA"/>
</dbReference>
<dbReference type="GO" id="GO:0001725">
    <property type="term" value="C:stress fiber"/>
    <property type="evidence" value="ECO:0007669"/>
    <property type="project" value="UniProtKB-SubCell"/>
</dbReference>
<dbReference type="GO" id="GO:0030018">
    <property type="term" value="C:Z disc"/>
    <property type="evidence" value="ECO:0007669"/>
    <property type="project" value="UniProtKB-SubCell"/>
</dbReference>
<dbReference type="GO" id="GO:0003779">
    <property type="term" value="F:actin binding"/>
    <property type="evidence" value="ECO:0000303"/>
    <property type="project" value="UniProtKB"/>
</dbReference>
<dbReference type="GO" id="GO:0051015">
    <property type="term" value="F:actin filament binding"/>
    <property type="evidence" value="ECO:0007669"/>
    <property type="project" value="InterPro"/>
</dbReference>
<dbReference type="GO" id="GO:0045296">
    <property type="term" value="F:cadherin binding"/>
    <property type="evidence" value="ECO:0007005"/>
    <property type="project" value="BHF-UCL"/>
</dbReference>
<dbReference type="GO" id="GO:0042802">
    <property type="term" value="F:identical protein binding"/>
    <property type="evidence" value="ECO:0000353"/>
    <property type="project" value="IntAct"/>
</dbReference>
<dbReference type="GO" id="GO:0003723">
    <property type="term" value="F:RNA binding"/>
    <property type="evidence" value="ECO:0007005"/>
    <property type="project" value="UniProtKB"/>
</dbReference>
<dbReference type="GO" id="GO:0030036">
    <property type="term" value="P:actin cytoskeleton organization"/>
    <property type="evidence" value="ECO:0000304"/>
    <property type="project" value="ProtInc"/>
</dbReference>
<dbReference type="GO" id="GO:0071346">
    <property type="term" value="P:cellular response to type II interferon"/>
    <property type="evidence" value="ECO:0007669"/>
    <property type="project" value="Ensembl"/>
</dbReference>
<dbReference type="GO" id="GO:0003382">
    <property type="term" value="P:epithelial cell morphogenesis"/>
    <property type="evidence" value="ECO:0007669"/>
    <property type="project" value="Ensembl"/>
</dbReference>
<dbReference type="GO" id="GO:0003334">
    <property type="term" value="P:keratinocyte development"/>
    <property type="evidence" value="ECO:0007669"/>
    <property type="project" value="Ensembl"/>
</dbReference>
<dbReference type="GO" id="GO:0007165">
    <property type="term" value="P:signal transduction"/>
    <property type="evidence" value="ECO:0000304"/>
    <property type="project" value="ProtInc"/>
</dbReference>
<dbReference type="GO" id="GO:0007519">
    <property type="term" value="P:skeletal muscle tissue development"/>
    <property type="evidence" value="ECO:0007669"/>
    <property type="project" value="Ensembl"/>
</dbReference>
<dbReference type="CDD" id="cd21309">
    <property type="entry name" value="CH_FLNB_rpt1"/>
    <property type="match status" value="1"/>
</dbReference>
<dbReference type="CDD" id="cd21313">
    <property type="entry name" value="CH_FLNB_rpt2"/>
    <property type="match status" value="1"/>
</dbReference>
<dbReference type="FunFam" id="1.10.418.10:FF:000006">
    <property type="entry name" value="Filamin-B isoform A"/>
    <property type="match status" value="1"/>
</dbReference>
<dbReference type="FunFam" id="2.60.40.10:FF:000042">
    <property type="entry name" value="Filamin-B isoform B"/>
    <property type="match status" value="2"/>
</dbReference>
<dbReference type="FunFam" id="2.60.40.10:FF:000092">
    <property type="entry name" value="Filamin-B isoform B"/>
    <property type="match status" value="1"/>
</dbReference>
<dbReference type="FunFam" id="1.10.418.10:FF:000008">
    <property type="entry name" value="Filamin-B isoform C"/>
    <property type="match status" value="1"/>
</dbReference>
<dbReference type="FunFam" id="2.60.40.10:FF:000007">
    <property type="entry name" value="Filamin-B isoform C"/>
    <property type="match status" value="3"/>
</dbReference>
<dbReference type="FunFam" id="2.60.40.10:FF:000079">
    <property type="entry name" value="Filamin-B isoform C"/>
    <property type="match status" value="1"/>
</dbReference>
<dbReference type="FunFam" id="2.60.40.10:FF:000125">
    <property type="entry name" value="filamin-B isoform X1"/>
    <property type="match status" value="1"/>
</dbReference>
<dbReference type="FunFam" id="2.60.40.10:FF:000138">
    <property type="entry name" value="filamin-B isoform X1"/>
    <property type="match status" value="1"/>
</dbReference>
<dbReference type="FunFam" id="2.60.40.10:FF:000154">
    <property type="entry name" value="filamin-B isoform X1"/>
    <property type="match status" value="1"/>
</dbReference>
<dbReference type="FunFam" id="2.60.40.10:FF:000102">
    <property type="entry name" value="filamin-B isoform X2"/>
    <property type="match status" value="1"/>
</dbReference>
<dbReference type="FunFam" id="2.60.40.10:FF:000001">
    <property type="entry name" value="Filamin-C isoform b"/>
    <property type="match status" value="5"/>
</dbReference>
<dbReference type="FunFam" id="2.60.40.10:FF:000105">
    <property type="entry name" value="filamin-C isoform X1"/>
    <property type="match status" value="1"/>
</dbReference>
<dbReference type="FunFam" id="2.60.40.10:FF:000115">
    <property type="entry name" value="filamin-C isoform X1"/>
    <property type="match status" value="1"/>
</dbReference>
<dbReference type="FunFam" id="2.60.40.10:FF:000126">
    <property type="entry name" value="filamin-C isoform X1"/>
    <property type="match status" value="1"/>
</dbReference>
<dbReference type="FunFam" id="2.60.40.10:FF:000157">
    <property type="entry name" value="filamin-C isoform X1"/>
    <property type="match status" value="1"/>
</dbReference>
<dbReference type="FunFam" id="2.60.40.10:FF:000096">
    <property type="entry name" value="filamin-C isoform X2"/>
    <property type="match status" value="1"/>
</dbReference>
<dbReference type="FunFam" id="2.60.40.10:FF:000118">
    <property type="entry name" value="filamin-C isoform X2"/>
    <property type="match status" value="1"/>
</dbReference>
<dbReference type="FunFam" id="2.60.40.10:FF:000122">
    <property type="entry name" value="filamin-C isoform X2"/>
    <property type="match status" value="1"/>
</dbReference>
<dbReference type="FunFam" id="2.60.40.10:FF:000168">
    <property type="entry name" value="filamin-C isoform X2"/>
    <property type="match status" value="1"/>
</dbReference>
<dbReference type="Gene3D" id="1.10.418.10">
    <property type="entry name" value="Calponin-like domain"/>
    <property type="match status" value="2"/>
</dbReference>
<dbReference type="Gene3D" id="2.60.40.10">
    <property type="entry name" value="Immunoglobulins"/>
    <property type="match status" value="24"/>
</dbReference>
<dbReference type="InterPro" id="IPR001589">
    <property type="entry name" value="Actinin_actin-bd_CS"/>
</dbReference>
<dbReference type="InterPro" id="IPR001715">
    <property type="entry name" value="CH_dom"/>
</dbReference>
<dbReference type="InterPro" id="IPR036872">
    <property type="entry name" value="CH_dom_sf"/>
</dbReference>
<dbReference type="InterPro" id="IPR044801">
    <property type="entry name" value="Filamin"/>
</dbReference>
<dbReference type="InterPro" id="IPR017868">
    <property type="entry name" value="Filamin/ABP280_repeat-like"/>
</dbReference>
<dbReference type="InterPro" id="IPR001298">
    <property type="entry name" value="Filamin/ABP280_rpt"/>
</dbReference>
<dbReference type="InterPro" id="IPR013783">
    <property type="entry name" value="Ig-like_fold"/>
</dbReference>
<dbReference type="InterPro" id="IPR014756">
    <property type="entry name" value="Ig_E-set"/>
</dbReference>
<dbReference type="PANTHER" id="PTHR38537:SF8">
    <property type="entry name" value="FILAMIN-A"/>
    <property type="match status" value="1"/>
</dbReference>
<dbReference type="PANTHER" id="PTHR38537">
    <property type="entry name" value="JITTERBUG, ISOFORM N"/>
    <property type="match status" value="1"/>
</dbReference>
<dbReference type="Pfam" id="PF00307">
    <property type="entry name" value="CH"/>
    <property type="match status" value="2"/>
</dbReference>
<dbReference type="Pfam" id="PF00630">
    <property type="entry name" value="Filamin"/>
    <property type="match status" value="24"/>
</dbReference>
<dbReference type="SMART" id="SM00033">
    <property type="entry name" value="CH"/>
    <property type="match status" value="2"/>
</dbReference>
<dbReference type="SMART" id="SM00557">
    <property type="entry name" value="IG_FLMN"/>
    <property type="match status" value="24"/>
</dbReference>
<dbReference type="SUPFAM" id="SSF47576">
    <property type="entry name" value="Calponin-homology domain, CH-domain"/>
    <property type="match status" value="1"/>
</dbReference>
<dbReference type="SUPFAM" id="SSF81296">
    <property type="entry name" value="E set domains"/>
    <property type="match status" value="24"/>
</dbReference>
<dbReference type="PROSITE" id="PS00019">
    <property type="entry name" value="ACTININ_1"/>
    <property type="match status" value="1"/>
</dbReference>
<dbReference type="PROSITE" id="PS00020">
    <property type="entry name" value="ACTININ_2"/>
    <property type="match status" value="1"/>
</dbReference>
<dbReference type="PROSITE" id="PS50021">
    <property type="entry name" value="CH"/>
    <property type="match status" value="2"/>
</dbReference>
<dbReference type="PROSITE" id="PS50194">
    <property type="entry name" value="FILAMIN_REPEAT"/>
    <property type="match status" value="24"/>
</dbReference>
<proteinExistence type="evidence at protein level"/>
<accession>O75369</accession>
<accession>B2ZZ83</accession>
<accession>B2ZZ84</accession>
<accession>B2ZZ85</accession>
<accession>C9JKE6</accession>
<accession>C9JMC4</accession>
<accession>Q13706</accession>
<accession>Q59EC2</accession>
<accession>Q60FE7</accession>
<accession>Q6MZJ1</accession>
<accession>Q8WXS9</accession>
<accession>Q8WXT0</accession>
<accession>Q8WXT1</accession>
<accession>Q8WXT2</accession>
<accession>Q8WXT3</accession>
<accession>Q9NRB5</accession>
<accession>Q9NT26</accession>
<accession>Q9UEV9</accession>